<protein>
    <recommendedName>
        <fullName evidence="17">Catechol O-methyltransferase</fullName>
        <ecNumber evidence="6 8 13">2.1.1.6</ecNumber>
    </recommendedName>
</protein>
<organism>
    <name type="scientific">Homo sapiens</name>
    <name type="common">Human</name>
    <dbReference type="NCBI Taxonomy" id="9606"/>
    <lineage>
        <taxon>Eukaryota</taxon>
        <taxon>Metazoa</taxon>
        <taxon>Chordata</taxon>
        <taxon>Craniata</taxon>
        <taxon>Vertebrata</taxon>
        <taxon>Euteleostomi</taxon>
        <taxon>Mammalia</taxon>
        <taxon>Eutheria</taxon>
        <taxon>Euarchontoglires</taxon>
        <taxon>Primates</taxon>
        <taxon>Haplorrhini</taxon>
        <taxon>Catarrhini</taxon>
        <taxon>Hominidae</taxon>
        <taxon>Homo</taxon>
    </lineage>
</organism>
<reference key="1">
    <citation type="journal article" date="1991" name="DNA Cell Biol.">
        <title>Cloning and characterization of human placental catechol-O-methyltransferase cDNA.</title>
        <authorList>
            <person name="Lundstroem K."/>
            <person name="Salminen M."/>
            <person name="Jalanko A."/>
            <person name="Savolainen R."/>
            <person name="Ulmanen I."/>
        </authorList>
    </citation>
    <scope>NUCLEOTIDE SEQUENCE [MRNA]</scope>
    <source>
        <tissue>Placenta</tissue>
    </source>
</reference>
<reference key="2">
    <citation type="journal article" date="1991" name="Proc. Natl. Acad. Sci. U.S.A.">
        <title>Human catechol-O-methyltransferase: cloning and expression of the membrane-associated form.</title>
        <authorList>
            <person name="Bertocci B."/>
            <person name="Miggiano V."/>
            <person name="da Prada M."/>
            <person name="Dembic Z."/>
            <person name="Lahm H.-W."/>
            <person name="Malherbe P."/>
        </authorList>
    </citation>
    <scope>NUCLEOTIDE SEQUENCE [MRNA]</scope>
    <scope>VARIANT SER-34</scope>
</reference>
<reference key="3">
    <citation type="journal article" date="1994" name="Eur. J. Biochem.">
        <title>Genomic organization of the human catechol O-methyltransferase gene and its expression from two distinct promoters.</title>
        <authorList>
            <person name="Tenhunen J."/>
            <person name="Salminen M."/>
            <person name="Lundstroem K."/>
            <person name="Kiviluoto T."/>
            <person name="Savolainen R."/>
            <person name="Ulmanen I."/>
        </authorList>
    </citation>
    <scope>NUCLEOTIDE SEQUENCE [GENOMIC DNA]</scope>
</reference>
<reference key="4">
    <citation type="submission" date="2008-09" db="EMBL/GenBank/DDBJ databases">
        <authorList>
            <person name="Li J.Y."/>
            <person name="Wang H.Y."/>
            <person name="Liu J."/>
            <person name="Liu F.J."/>
        </authorList>
    </citation>
    <scope>NUCLEOTIDE SEQUENCE [MRNA]</scope>
</reference>
<reference key="5">
    <citation type="journal article" date="2004" name="Nat. Genet.">
        <title>Complete sequencing and characterization of 21,243 full-length human cDNAs.</title>
        <authorList>
            <person name="Ota T."/>
            <person name="Suzuki Y."/>
            <person name="Nishikawa T."/>
            <person name="Otsuki T."/>
            <person name="Sugiyama T."/>
            <person name="Irie R."/>
            <person name="Wakamatsu A."/>
            <person name="Hayashi K."/>
            <person name="Sato H."/>
            <person name="Nagai K."/>
            <person name="Kimura K."/>
            <person name="Makita H."/>
            <person name="Sekine M."/>
            <person name="Obayashi M."/>
            <person name="Nishi T."/>
            <person name="Shibahara T."/>
            <person name="Tanaka T."/>
            <person name="Ishii S."/>
            <person name="Yamamoto J."/>
            <person name="Saito K."/>
            <person name="Kawai Y."/>
            <person name="Isono Y."/>
            <person name="Nakamura Y."/>
            <person name="Nagahari K."/>
            <person name="Murakami K."/>
            <person name="Yasuda T."/>
            <person name="Iwayanagi T."/>
            <person name="Wagatsuma M."/>
            <person name="Shiratori A."/>
            <person name="Sudo H."/>
            <person name="Hosoiri T."/>
            <person name="Kaku Y."/>
            <person name="Kodaira H."/>
            <person name="Kondo H."/>
            <person name="Sugawara M."/>
            <person name="Takahashi M."/>
            <person name="Kanda K."/>
            <person name="Yokoi T."/>
            <person name="Furuya T."/>
            <person name="Kikkawa E."/>
            <person name="Omura Y."/>
            <person name="Abe K."/>
            <person name="Kamihara K."/>
            <person name="Katsuta N."/>
            <person name="Sato K."/>
            <person name="Tanikawa M."/>
            <person name="Yamazaki M."/>
            <person name="Ninomiya K."/>
            <person name="Ishibashi T."/>
            <person name="Yamashita H."/>
            <person name="Murakawa K."/>
            <person name="Fujimori K."/>
            <person name="Tanai H."/>
            <person name="Kimata M."/>
            <person name="Watanabe M."/>
            <person name="Hiraoka S."/>
            <person name="Chiba Y."/>
            <person name="Ishida S."/>
            <person name="Ono Y."/>
            <person name="Takiguchi S."/>
            <person name="Watanabe S."/>
            <person name="Yosida M."/>
            <person name="Hotuta T."/>
            <person name="Kusano J."/>
            <person name="Kanehori K."/>
            <person name="Takahashi-Fujii A."/>
            <person name="Hara H."/>
            <person name="Tanase T.-O."/>
            <person name="Nomura Y."/>
            <person name="Togiya S."/>
            <person name="Komai F."/>
            <person name="Hara R."/>
            <person name="Takeuchi K."/>
            <person name="Arita M."/>
            <person name="Imose N."/>
            <person name="Musashino K."/>
            <person name="Yuuki H."/>
            <person name="Oshima A."/>
            <person name="Sasaki N."/>
            <person name="Aotsuka S."/>
            <person name="Yoshikawa Y."/>
            <person name="Matsunawa H."/>
            <person name="Ichihara T."/>
            <person name="Shiohata N."/>
            <person name="Sano S."/>
            <person name="Moriya S."/>
            <person name="Momiyama H."/>
            <person name="Satoh N."/>
            <person name="Takami S."/>
            <person name="Terashima Y."/>
            <person name="Suzuki O."/>
            <person name="Nakagawa S."/>
            <person name="Senoh A."/>
            <person name="Mizoguchi H."/>
            <person name="Goto Y."/>
            <person name="Shimizu F."/>
            <person name="Wakebe H."/>
            <person name="Hishigaki H."/>
            <person name="Watanabe T."/>
            <person name="Sugiyama A."/>
            <person name="Takemoto M."/>
            <person name="Kawakami B."/>
            <person name="Yamazaki M."/>
            <person name="Watanabe K."/>
            <person name="Kumagai A."/>
            <person name="Itakura S."/>
            <person name="Fukuzumi Y."/>
            <person name="Fujimori Y."/>
            <person name="Komiyama M."/>
            <person name="Tashiro H."/>
            <person name="Tanigami A."/>
            <person name="Fujiwara T."/>
            <person name="Ono T."/>
            <person name="Yamada K."/>
            <person name="Fujii Y."/>
            <person name="Ozaki K."/>
            <person name="Hirao M."/>
            <person name="Ohmori Y."/>
            <person name="Kawabata A."/>
            <person name="Hikiji T."/>
            <person name="Kobatake N."/>
            <person name="Inagaki H."/>
            <person name="Ikema Y."/>
            <person name="Okamoto S."/>
            <person name="Okitani R."/>
            <person name="Kawakami T."/>
            <person name="Noguchi S."/>
            <person name="Itoh T."/>
            <person name="Shigeta K."/>
            <person name="Senba T."/>
            <person name="Matsumura K."/>
            <person name="Nakajima Y."/>
            <person name="Mizuno T."/>
            <person name="Morinaga M."/>
            <person name="Sasaki M."/>
            <person name="Togashi T."/>
            <person name="Oyama M."/>
            <person name="Hata H."/>
            <person name="Watanabe M."/>
            <person name="Komatsu T."/>
            <person name="Mizushima-Sugano J."/>
            <person name="Satoh T."/>
            <person name="Shirai Y."/>
            <person name="Takahashi Y."/>
            <person name="Nakagawa K."/>
            <person name="Okumura K."/>
            <person name="Nagase T."/>
            <person name="Nomura N."/>
            <person name="Kikuchi H."/>
            <person name="Masuho Y."/>
            <person name="Yamashita R."/>
            <person name="Nakai K."/>
            <person name="Yada T."/>
            <person name="Nakamura Y."/>
            <person name="Ohara O."/>
            <person name="Isogai T."/>
            <person name="Sugano S."/>
        </authorList>
    </citation>
    <scope>NUCLEOTIDE SEQUENCE [LARGE SCALE MRNA]</scope>
</reference>
<reference key="6">
    <citation type="journal article" date="2004" name="Genome Biol.">
        <title>A genome annotation-driven approach to cloning the human ORFeome.</title>
        <authorList>
            <person name="Collins J.E."/>
            <person name="Wright C.L."/>
            <person name="Edwards C.A."/>
            <person name="Davis M.P."/>
            <person name="Grinham J.A."/>
            <person name="Cole C.G."/>
            <person name="Goward M.E."/>
            <person name="Aguado B."/>
            <person name="Mallya M."/>
            <person name="Mokrab Y."/>
            <person name="Huckle E.J."/>
            <person name="Beare D.M."/>
            <person name="Dunham I."/>
        </authorList>
    </citation>
    <scope>NUCLEOTIDE SEQUENCE [LARGE SCALE MRNA]</scope>
    <scope>VARIANT MET-158</scope>
</reference>
<reference key="7">
    <citation type="submission" date="2004-06" db="EMBL/GenBank/DDBJ databases">
        <title>Cloning of human full open reading frames in Gateway(TM) system entry vector (pDONR201).</title>
        <authorList>
            <person name="Ebert L."/>
            <person name="Schick M."/>
            <person name="Neubert P."/>
            <person name="Schatten R."/>
            <person name="Henze S."/>
            <person name="Korn B."/>
        </authorList>
    </citation>
    <scope>NUCLEOTIDE SEQUENCE [LARGE SCALE MRNA]</scope>
</reference>
<reference key="8">
    <citation type="submission" date="2003-07" db="EMBL/GenBank/DDBJ databases">
        <authorList>
            <consortium name="NIEHS SNPs program"/>
        </authorList>
    </citation>
    <scope>NUCLEOTIDE SEQUENCE [GENOMIC DNA]</scope>
    <scope>VARIANTS SER-72 AND MET-158</scope>
</reference>
<reference key="9">
    <citation type="journal article" date="1999" name="Nature">
        <title>The DNA sequence of human chromosome 22.</title>
        <authorList>
            <person name="Dunham I."/>
            <person name="Hunt A.R."/>
            <person name="Collins J.E."/>
            <person name="Bruskiewich R."/>
            <person name="Beare D.M."/>
            <person name="Clamp M."/>
            <person name="Smink L.J."/>
            <person name="Ainscough R."/>
            <person name="Almeida J.P."/>
            <person name="Babbage A.K."/>
            <person name="Bagguley C."/>
            <person name="Bailey J."/>
            <person name="Barlow K.F."/>
            <person name="Bates K.N."/>
            <person name="Beasley O.P."/>
            <person name="Bird C.P."/>
            <person name="Blakey S.E."/>
            <person name="Bridgeman A.M."/>
            <person name="Buck D."/>
            <person name="Burgess J."/>
            <person name="Burrill W.D."/>
            <person name="Burton J."/>
            <person name="Carder C."/>
            <person name="Carter N.P."/>
            <person name="Chen Y."/>
            <person name="Clark G."/>
            <person name="Clegg S.M."/>
            <person name="Cobley V.E."/>
            <person name="Cole C.G."/>
            <person name="Collier R.E."/>
            <person name="Connor R."/>
            <person name="Conroy D."/>
            <person name="Corby N.R."/>
            <person name="Coville G.J."/>
            <person name="Cox A.V."/>
            <person name="Davis J."/>
            <person name="Dawson E."/>
            <person name="Dhami P.D."/>
            <person name="Dockree C."/>
            <person name="Dodsworth S.J."/>
            <person name="Durbin R.M."/>
            <person name="Ellington A.G."/>
            <person name="Evans K.L."/>
            <person name="Fey J.M."/>
            <person name="Fleming K."/>
            <person name="French L."/>
            <person name="Garner A.A."/>
            <person name="Gilbert J.G.R."/>
            <person name="Goward M.E."/>
            <person name="Grafham D.V."/>
            <person name="Griffiths M.N.D."/>
            <person name="Hall C."/>
            <person name="Hall R.E."/>
            <person name="Hall-Tamlyn G."/>
            <person name="Heathcott R.W."/>
            <person name="Ho S."/>
            <person name="Holmes S."/>
            <person name="Hunt S.E."/>
            <person name="Jones M.C."/>
            <person name="Kershaw J."/>
            <person name="Kimberley A.M."/>
            <person name="King A."/>
            <person name="Laird G.K."/>
            <person name="Langford C.F."/>
            <person name="Leversha M.A."/>
            <person name="Lloyd C."/>
            <person name="Lloyd D.M."/>
            <person name="Martyn I.D."/>
            <person name="Mashreghi-Mohammadi M."/>
            <person name="Matthews L.H."/>
            <person name="Mccann O.T."/>
            <person name="Mcclay J."/>
            <person name="Mclaren S."/>
            <person name="McMurray A.A."/>
            <person name="Milne S.A."/>
            <person name="Mortimore B.J."/>
            <person name="Odell C.N."/>
            <person name="Pavitt R."/>
            <person name="Pearce A.V."/>
            <person name="Pearson D."/>
            <person name="Phillimore B.J.C.T."/>
            <person name="Phillips S.H."/>
            <person name="Plumb R.W."/>
            <person name="Ramsay H."/>
            <person name="Ramsey Y."/>
            <person name="Rogers L."/>
            <person name="Ross M.T."/>
            <person name="Scott C.E."/>
            <person name="Sehra H.K."/>
            <person name="Skuce C.D."/>
            <person name="Smalley S."/>
            <person name="Smith M.L."/>
            <person name="Soderlund C."/>
            <person name="Spragon L."/>
            <person name="Steward C.A."/>
            <person name="Sulston J.E."/>
            <person name="Swann R.M."/>
            <person name="Vaudin M."/>
            <person name="Wall M."/>
            <person name="Wallis J.M."/>
            <person name="Whiteley M.N."/>
            <person name="Willey D.L."/>
            <person name="Williams L."/>
            <person name="Williams S.A."/>
            <person name="Williamson H."/>
            <person name="Wilmer T.E."/>
            <person name="Wilming L."/>
            <person name="Wright C.L."/>
            <person name="Hubbard T."/>
            <person name="Bentley D.R."/>
            <person name="Beck S."/>
            <person name="Rogers J."/>
            <person name="Shimizu N."/>
            <person name="Minoshima S."/>
            <person name="Kawasaki K."/>
            <person name="Sasaki T."/>
            <person name="Asakawa S."/>
            <person name="Kudoh J."/>
            <person name="Shintani A."/>
            <person name="Shibuya K."/>
            <person name="Yoshizaki Y."/>
            <person name="Aoki N."/>
            <person name="Mitsuyama S."/>
            <person name="Roe B.A."/>
            <person name="Chen F."/>
            <person name="Chu L."/>
            <person name="Crabtree J."/>
            <person name="Deschamps S."/>
            <person name="Do A."/>
            <person name="Do T."/>
            <person name="Dorman A."/>
            <person name="Fang F."/>
            <person name="Fu Y."/>
            <person name="Hu P."/>
            <person name="Hua A."/>
            <person name="Kenton S."/>
            <person name="Lai H."/>
            <person name="Lao H.I."/>
            <person name="Lewis J."/>
            <person name="Lewis S."/>
            <person name="Lin S.-P."/>
            <person name="Loh P."/>
            <person name="Malaj E."/>
            <person name="Nguyen T."/>
            <person name="Pan H."/>
            <person name="Phan S."/>
            <person name="Qi S."/>
            <person name="Qian Y."/>
            <person name="Ray L."/>
            <person name="Ren Q."/>
            <person name="Shaull S."/>
            <person name="Sloan D."/>
            <person name="Song L."/>
            <person name="Wang Q."/>
            <person name="Wang Y."/>
            <person name="Wang Z."/>
            <person name="White J."/>
            <person name="Willingham D."/>
            <person name="Wu H."/>
            <person name="Yao Z."/>
            <person name="Zhan M."/>
            <person name="Zhang G."/>
            <person name="Chissoe S."/>
            <person name="Murray J."/>
            <person name="Miller N."/>
            <person name="Minx P."/>
            <person name="Fulton R."/>
            <person name="Johnson D."/>
            <person name="Bemis G."/>
            <person name="Bentley D."/>
            <person name="Bradshaw H."/>
            <person name="Bourne S."/>
            <person name="Cordes M."/>
            <person name="Du Z."/>
            <person name="Fulton L."/>
            <person name="Goela D."/>
            <person name="Graves T."/>
            <person name="Hawkins J."/>
            <person name="Hinds K."/>
            <person name="Kemp K."/>
            <person name="Latreille P."/>
            <person name="Layman D."/>
            <person name="Ozersky P."/>
            <person name="Rohlfing T."/>
            <person name="Scheet P."/>
            <person name="Walker C."/>
            <person name="Wamsley A."/>
            <person name="Wohldmann P."/>
            <person name="Pepin K."/>
            <person name="Nelson J."/>
            <person name="Korf I."/>
            <person name="Bedell J.A."/>
            <person name="Hillier L.W."/>
            <person name="Mardis E."/>
            <person name="Waterston R."/>
            <person name="Wilson R."/>
            <person name="Emanuel B.S."/>
            <person name="Shaikh T."/>
            <person name="Kurahashi H."/>
            <person name="Saitta S."/>
            <person name="Budarf M.L."/>
            <person name="McDermid H.E."/>
            <person name="Johnson A."/>
            <person name="Wong A.C.C."/>
            <person name="Morrow B.E."/>
            <person name="Edelmann L."/>
            <person name="Kim U.J."/>
            <person name="Shizuya H."/>
            <person name="Simon M.I."/>
            <person name="Dumanski J.P."/>
            <person name="Peyrard M."/>
            <person name="Kedra D."/>
            <person name="Seroussi E."/>
            <person name="Fransson I."/>
            <person name="Tapia I."/>
            <person name="Bruder C.E."/>
            <person name="O'Brien K.P."/>
            <person name="Wilkinson P."/>
            <person name="Bodenteich A."/>
            <person name="Hartman K."/>
            <person name="Hu X."/>
            <person name="Khan A.S."/>
            <person name="Lane L."/>
            <person name="Tilahun Y."/>
            <person name="Wright H."/>
        </authorList>
    </citation>
    <scope>NUCLEOTIDE SEQUENCE [LARGE SCALE GENOMIC DNA]</scope>
</reference>
<reference key="10">
    <citation type="submission" date="2005-09" db="EMBL/GenBank/DDBJ databases">
        <authorList>
            <person name="Mural R.J."/>
            <person name="Istrail S."/>
            <person name="Sutton G.G."/>
            <person name="Florea L."/>
            <person name="Halpern A.L."/>
            <person name="Mobarry C.M."/>
            <person name="Lippert R."/>
            <person name="Walenz B."/>
            <person name="Shatkay H."/>
            <person name="Dew I."/>
            <person name="Miller J.R."/>
            <person name="Flanigan M.J."/>
            <person name="Edwards N.J."/>
            <person name="Bolanos R."/>
            <person name="Fasulo D."/>
            <person name="Halldorsson B.V."/>
            <person name="Hannenhalli S."/>
            <person name="Turner R."/>
            <person name="Yooseph S."/>
            <person name="Lu F."/>
            <person name="Nusskern D.R."/>
            <person name="Shue B.C."/>
            <person name="Zheng X.H."/>
            <person name="Zhong F."/>
            <person name="Delcher A.L."/>
            <person name="Huson D.H."/>
            <person name="Kravitz S.A."/>
            <person name="Mouchard L."/>
            <person name="Reinert K."/>
            <person name="Remington K.A."/>
            <person name="Clark A.G."/>
            <person name="Waterman M.S."/>
            <person name="Eichler E.E."/>
            <person name="Adams M.D."/>
            <person name="Hunkapiller M.W."/>
            <person name="Myers E.W."/>
            <person name="Venter J.C."/>
        </authorList>
    </citation>
    <scope>NUCLEOTIDE SEQUENCE [LARGE SCALE GENOMIC DNA]</scope>
    <scope>VARIANT MET-158</scope>
</reference>
<reference key="11">
    <citation type="journal article" date="2004" name="Genome Res.">
        <title>The status, quality, and expansion of the NIH full-length cDNA project: the Mammalian Gene Collection (MGC).</title>
        <authorList>
            <consortium name="The MGC Project Team"/>
        </authorList>
    </citation>
    <scope>NUCLEOTIDE SEQUENCE [LARGE SCALE MRNA]</scope>
    <source>
        <tissue>Brain</tissue>
        <tissue>Muscle</tissue>
        <tissue>Skin</tissue>
    </source>
</reference>
<reference key="12">
    <citation type="journal article" date="1994" name="Eur. J. Biochem.">
        <title>Mass spectrometric analysis of human soluble catechol O-methyltransferase expressed in Escherichia coli. Identification of a product of ribosomal frameshifting and of reactive cysteines involved in S-adenosyl-L-methionine binding.</title>
        <authorList>
            <person name="Vilbois F."/>
            <person name="Caspers P."/>
            <person name="da Prada M."/>
            <person name="Lang G."/>
            <person name="Karrer C."/>
            <person name="Lahm H.W."/>
            <person name="Cesura A.M."/>
        </authorList>
    </citation>
    <scope>PROTEIN SEQUENCE OF 52-61</scope>
</reference>
<reference key="13">
    <citation type="journal article" date="1991" name="Biochem. Biophys. Res. Commun.">
        <title>Purification and partial sequence analysis of the soluble catechol-O-methyltransferase from human placenta: comparison to the rat liver enzyme.</title>
        <authorList>
            <person name="Tilgmann C."/>
            <person name="Kalkkinen N."/>
        </authorList>
    </citation>
    <scope>PROTEIN SEQUENCE OF 59-271</scope>
    <source>
        <tissue>Placenta</tissue>
    </source>
</reference>
<reference key="14">
    <citation type="journal article" date="1991" name="Eur. J. Biochem.">
        <title>Cell-free synthesis of rat and human catechol O-methyltransferase. Insertion of the membrane-bound form into microsomal membranes in vitro.</title>
        <authorList>
            <person name="Ulmanen I."/>
            <person name="Lundstroem K."/>
        </authorList>
    </citation>
    <scope>CHARACTERIZATION OF THE TWO FORMS</scope>
</reference>
<reference key="15">
    <citation type="journal article" date="2011" name="BMC Syst. Biol.">
        <title>Initial characterization of the human central proteome.</title>
        <authorList>
            <person name="Burkard T.R."/>
            <person name="Planyavsky M."/>
            <person name="Kaupe I."/>
            <person name="Breitwieser F.P."/>
            <person name="Buerckstuemmer T."/>
            <person name="Bennett K.L."/>
            <person name="Superti-Furga G."/>
            <person name="Colinge J."/>
        </authorList>
    </citation>
    <scope>IDENTIFICATION BY MASS SPECTROMETRY [LARGE SCALE ANALYSIS]</scope>
</reference>
<reference key="16">
    <citation type="journal article" date="2011" name="J. Biol. Chem.">
        <title>Orientation and cellular distribution of membrane-bound catechol-O-methyltransferase in cortical neurons: implications for drug development.</title>
        <authorList>
            <person name="Chen J."/>
            <person name="Song J."/>
            <person name="Yuan P."/>
            <person name="Tian Q."/>
            <person name="Ji Y."/>
            <person name="Ren-Patterson R."/>
            <person name="Liu G."/>
            <person name="Sei Y."/>
            <person name="Weinberger D.R."/>
        </authorList>
    </citation>
    <scope>FUNCTION</scope>
    <scope>CATALYTIC ACTIVITY</scope>
    <scope>SUBCELLULAR LOCATION</scope>
    <scope>TOPOLOGY</scope>
</reference>
<reference key="17">
    <citation type="journal article" date="2014" name="J. Proteomics">
        <title>An enzyme assisted RP-RPLC approach for in-depth analysis of human liver phosphoproteome.</title>
        <authorList>
            <person name="Bian Y."/>
            <person name="Song C."/>
            <person name="Cheng K."/>
            <person name="Dong M."/>
            <person name="Wang F."/>
            <person name="Huang J."/>
            <person name="Sun D."/>
            <person name="Wang L."/>
            <person name="Ye M."/>
            <person name="Zou H."/>
        </authorList>
    </citation>
    <scope>IDENTIFICATION BY MASS SPECTROMETRY [LARGE SCALE ANALYSIS]</scope>
    <source>
        <tissue>Liver</tissue>
    </source>
</reference>
<reference key="18">
    <citation type="journal article" date="2015" name="Proteomics">
        <title>N-terminome analysis of the human mitochondrial proteome.</title>
        <authorList>
            <person name="Vaca Jacome A.S."/>
            <person name="Rabilloud T."/>
            <person name="Schaeffer-Reiss C."/>
            <person name="Rompais M."/>
            <person name="Ayoub D."/>
            <person name="Lane L."/>
            <person name="Bairoch A."/>
            <person name="Van Dorsselaer A."/>
            <person name="Carapito C."/>
        </authorList>
    </citation>
    <scope>IDENTIFICATION BY MASS SPECTROMETRY [LARGE SCALE ANALYSIS]</scope>
</reference>
<reference key="19">
    <citation type="journal article" date="2008" name="J. Mol. Biol.">
        <title>Crystal structures of human 108V and 108M catechol O-methyltransferase.</title>
        <authorList>
            <person name="Rutherford K."/>
            <person name="Le Trong I."/>
            <person name="Stenkamp R.E."/>
            <person name="Parson W.W."/>
        </authorList>
    </citation>
    <scope>X-RAY CRYSTALLOGRAPHY (1.3 ANGSTROMS) OF 52-264 OF MUTANTS VAL-108 AND MET-108 IN COMPLEX WITH SUBSTRATE ANALOG 3,5-DINITROCATECHOL; MAGNESIUM AND S-ADENOSYL-L-METHIONINE</scope>
</reference>
<reference key="20">
    <citation type="journal article" date="1996" name="Pharmacogenetics">
        <title>Human catechol-O-methyltransferase pharmacogenetics: description of a functional polymorphism and its potential application to neuropsychiatric disorders.</title>
        <authorList>
            <person name="Lachman H.M."/>
            <person name="Papolos D.F."/>
            <person name="Saito T."/>
            <person name="Yu Y.-M."/>
            <person name="Szumlanski C.L."/>
            <person name="Weinshilboum R.M."/>
        </authorList>
    </citation>
    <scope>VARIANT COMT*2 MET-158</scope>
</reference>
<reference key="21">
    <citation type="journal article" date="1999" name="Mol. Psychiatry">
        <title>Association between the functional variant of the catechol-O-methyltransferase (COMT) gene and type 1 alcoholism.</title>
        <authorList>
            <person name="Tiihonen J."/>
            <person name="Hallikainen T."/>
            <person name="Lachman H."/>
            <person name="Saito T."/>
            <person name="Volavka J."/>
            <person name="Kauhanen J."/>
            <person name="Salonen J.T."/>
            <person name="Ryynaenen O.-P."/>
            <person name="Koulu M."/>
            <person name="Karvonen M.K."/>
            <person name="Pohjalainen T."/>
            <person name="Syvaelahti E."/>
            <person name="Hietala J."/>
        </authorList>
    </citation>
    <scope>INVOLVEMENT IN SUSCEPTIBILITY TO ALCOHOLISM</scope>
</reference>
<reference key="22">
    <citation type="journal article" date="1999" name="Nat. Genet.">
        <title>Characterization of single-nucleotide polymorphisms in coding regions of human genes.</title>
        <authorList>
            <person name="Cargill M."/>
            <person name="Altshuler D."/>
            <person name="Ireland J."/>
            <person name="Sklar P."/>
            <person name="Ardlie K."/>
            <person name="Patil N."/>
            <person name="Shaw N."/>
            <person name="Lane C.R."/>
            <person name="Lim E.P."/>
            <person name="Kalyanaraman N."/>
            <person name="Nemesh J."/>
            <person name="Ziaugra L."/>
            <person name="Friedland L."/>
            <person name="Rolfe A."/>
            <person name="Warrington J."/>
            <person name="Lipshutz R."/>
            <person name="Daley G.Q."/>
            <person name="Lander E.S."/>
        </authorList>
    </citation>
    <scope>VARIANTS SER-34 AND SER-72</scope>
</reference>
<reference key="23">
    <citation type="journal article" date="1999" name="Nat. Genet.">
        <authorList>
            <person name="Cargill M."/>
            <person name="Altshuler D."/>
            <person name="Ireland J."/>
            <person name="Sklar P."/>
            <person name="Ardlie K."/>
            <person name="Patil N."/>
            <person name="Shaw N."/>
            <person name="Lane C.R."/>
            <person name="Lim E.P."/>
            <person name="Kalyanaraman N."/>
            <person name="Nemesh J."/>
            <person name="Ziaugra L."/>
            <person name="Friedland L."/>
            <person name="Rolfe A."/>
            <person name="Warrington J."/>
            <person name="Lipshutz R."/>
            <person name="Daley G.Q."/>
            <person name="Lander E.S."/>
        </authorList>
    </citation>
    <scope>ERRATUM OF PUBMED:10391209</scope>
</reference>
<reference key="24">
    <citation type="journal article" date="2001" name="Cancer Res.">
        <title>Catechol-O-methyltransferase (COMT)-mediated metabolism of catechol estrogens: comparison of wild-type and variant COMT isoforms.</title>
        <authorList>
            <person name="Dawling S."/>
            <person name="Roodi N."/>
            <person name="Mernaugh R.L."/>
            <person name="Wang X."/>
            <person name="Parl F.F."/>
        </authorList>
    </citation>
    <scope>CHARACTERIZATION OF VARIANT COMT*2 MET-158</scope>
    <scope>FUNCTION</scope>
    <scope>CATALYTIC ACTIVITY</scope>
    <scope>BIOPHYSICOCHEMICAL PROPERTIES</scope>
    <scope>SUBCELLULAR LOCATION</scope>
</reference>
<reference key="25">
    <citation type="journal article" date="2005" name="Hum. Genet.">
        <title>Association of Ala72Ser polymorphism with COMT enzyme activity and the risk of schizophrenia in Koreans.</title>
        <authorList>
            <person name="Lee S.-G."/>
            <person name="Joo Y."/>
            <person name="Kim B."/>
            <person name="Chung S."/>
            <person name="Kim H.-L."/>
            <person name="Lee I."/>
            <person name="Choi B."/>
            <person name="Kim C."/>
            <person name="Song K."/>
        </authorList>
    </citation>
    <scope>CHARACTERIZATION OF VARIANT SER-72</scope>
    <scope>INVOLVEMENT IN SCZD</scope>
    <scope>CATALYTIC ACTIVITY</scope>
</reference>
<reference key="26">
    <citation type="journal article" date="2008" name="Biochim. Biophys. Acta">
        <title>The V108M mutation decreases the structural stability of catechol O-methyltransferase.</title>
        <authorList>
            <person name="Rutherford K."/>
            <person name="Alphandery E."/>
            <person name="McMillan A."/>
            <person name="Daggett V."/>
            <person name="Parson W.W."/>
        </authorList>
    </citation>
    <scope>CHARACTERIZATION OF VARIANT COMT*2 MET-158</scope>
</reference>
<reference key="27">
    <citation type="journal article" date="2008" name="Metabolism">
        <title>Catechol O-methyltransferase val158-met polymorphism is associated with abdominal obesity and blood pressure in men.</title>
        <authorList>
            <person name="Annerbrink K."/>
            <person name="Westberg L."/>
            <person name="Nilsson S."/>
            <person name="Rosmond R."/>
            <person name="Holm G."/>
            <person name="Eriksson E."/>
        </authorList>
    </citation>
    <scope>VARIANT COMT*2 MET-158</scope>
</reference>
<sequence length="271" mass="30037">MPEAPPLLLAAVLLGLVLLVVLLLLLRHWGWGLCLIGWNEFILQPIHNLLMGDTKEQRILNHVLQHAEPGNAQSVLEAIDTYCEQKEWAMNVGDKKGKIVDAVIQEHQPSVLLELGAYCGYSAVRMARLLSPGARLITIEINPDCAAITQRMVDFAGVKDKVTLVVGASQDIIPQLKKKYDVDTLDMVFLDHWKDRYLPDTLLLEECGLLRKGTVLLADNVICPGAPDFLAHVRGSSCFECTHYQSFLEYREVVDGLEKAIYKGPGSEAGP</sequence>
<gene>
    <name evidence="19" type="primary">COMT</name>
</gene>
<comment type="function">
    <text evidence="6 13">Catalyzes the O-methylation, and thereby the inactivation, of catecholamine neurotransmitters and catechol hormones. Also shortens the biological half-lives of certain neuroactive drugs, like L-DOPA, alpha-methyl DOPA and isoproterenol.</text>
</comment>
<comment type="catalytic activity">
    <reaction evidence="8 13">
        <text>a catechol + S-adenosyl-L-methionine = a guaiacol + S-adenosyl-L-homocysteine + H(+)</text>
        <dbReference type="Rhea" id="RHEA:17877"/>
        <dbReference type="ChEBI" id="CHEBI:15378"/>
        <dbReference type="ChEBI" id="CHEBI:33566"/>
        <dbReference type="ChEBI" id="CHEBI:57856"/>
        <dbReference type="ChEBI" id="CHEBI:59789"/>
        <dbReference type="ChEBI" id="CHEBI:134251"/>
        <dbReference type="EC" id="2.1.1.6"/>
    </reaction>
    <physiologicalReaction direction="left-to-right" evidence="18">
        <dbReference type="Rhea" id="RHEA:17878"/>
    </physiologicalReaction>
</comment>
<comment type="catalytic activity">
    <reaction evidence="6">
        <text>2-hydroxyestrone + S-adenosyl-L-methionine = 2-hydroxy-3-methoxy-estrone + S-adenosyl-L-homocysteine + H(+)</text>
        <dbReference type="Rhea" id="RHEA:53108"/>
        <dbReference type="ChEBI" id="CHEBI:1156"/>
        <dbReference type="ChEBI" id="CHEBI:15378"/>
        <dbReference type="ChEBI" id="CHEBI:57856"/>
        <dbReference type="ChEBI" id="CHEBI:59789"/>
        <dbReference type="ChEBI" id="CHEBI:136980"/>
    </reaction>
    <physiologicalReaction direction="left-to-right" evidence="18">
        <dbReference type="Rhea" id="RHEA:53109"/>
    </physiologicalReaction>
</comment>
<comment type="catalytic activity">
    <reaction evidence="6">
        <text>4-hydroxyestrone + S-adenosyl-L-methionine = 4-methoxyestrone + S-adenosyl-L-homocysteine + H(+)</text>
        <dbReference type="Rhea" id="RHEA:53104"/>
        <dbReference type="ChEBI" id="CHEBI:15378"/>
        <dbReference type="ChEBI" id="CHEBI:57856"/>
        <dbReference type="ChEBI" id="CHEBI:59789"/>
        <dbReference type="ChEBI" id="CHEBI:87602"/>
        <dbReference type="ChEBI" id="CHEBI:136972"/>
    </reaction>
    <physiologicalReaction direction="left-to-right" evidence="18">
        <dbReference type="Rhea" id="RHEA:53105"/>
    </physiologicalReaction>
</comment>
<comment type="catalytic activity">
    <reaction evidence="6">
        <text>2-hydroxyestrone + S-adenosyl-L-methionine = 2-methoxyestrone + S-adenosyl-L-homocysteine + H(+)</text>
        <dbReference type="Rhea" id="RHEA:53100"/>
        <dbReference type="ChEBI" id="CHEBI:1156"/>
        <dbReference type="ChEBI" id="CHEBI:1189"/>
        <dbReference type="ChEBI" id="CHEBI:15378"/>
        <dbReference type="ChEBI" id="CHEBI:57856"/>
        <dbReference type="ChEBI" id="CHEBI:59789"/>
    </reaction>
    <physiologicalReaction direction="left-to-right" evidence="18">
        <dbReference type="Rhea" id="RHEA:53101"/>
    </physiologicalReaction>
</comment>
<comment type="catalytic activity">
    <reaction evidence="6">
        <text>4-hydroxy-17beta-estradiol + S-adenosyl-L-methionine = 4-methoxy-17beta-estradiol + S-adenosyl-L-homocysteine + H(+)</text>
        <dbReference type="Rhea" id="RHEA:53096"/>
        <dbReference type="ChEBI" id="CHEBI:15378"/>
        <dbReference type="ChEBI" id="CHEBI:57856"/>
        <dbReference type="ChEBI" id="CHEBI:59789"/>
        <dbReference type="ChEBI" id="CHEBI:62845"/>
        <dbReference type="ChEBI" id="CHEBI:136975"/>
    </reaction>
    <physiologicalReaction direction="left-to-right" evidence="18">
        <dbReference type="Rhea" id="RHEA:53097"/>
    </physiologicalReaction>
</comment>
<comment type="catalytic activity">
    <reaction evidence="6">
        <text>2-hydroxy-17beta-estradiol + S-adenosyl-L-methionine = 2-hydroxy-3-methoxy-17beta-estradiol + S-adenosyl-L-homocysteine + H(+)</text>
        <dbReference type="Rhea" id="RHEA:53092"/>
        <dbReference type="ChEBI" id="CHEBI:15378"/>
        <dbReference type="ChEBI" id="CHEBI:28744"/>
        <dbReference type="ChEBI" id="CHEBI:57856"/>
        <dbReference type="ChEBI" id="CHEBI:59789"/>
        <dbReference type="ChEBI" id="CHEBI:89268"/>
    </reaction>
    <physiologicalReaction direction="left-to-right" evidence="18">
        <dbReference type="Rhea" id="RHEA:53093"/>
    </physiologicalReaction>
</comment>
<comment type="catalytic activity">
    <reaction evidence="6">
        <text>2-hydroxy-17beta-estradiol + S-adenosyl-L-methionine = 2-methoxy-17beta-estradiol + S-adenosyl-L-homocysteine + H(+)</text>
        <dbReference type="Rhea" id="RHEA:53088"/>
        <dbReference type="ChEBI" id="CHEBI:15378"/>
        <dbReference type="ChEBI" id="CHEBI:28744"/>
        <dbReference type="ChEBI" id="CHEBI:28955"/>
        <dbReference type="ChEBI" id="CHEBI:57856"/>
        <dbReference type="ChEBI" id="CHEBI:59789"/>
    </reaction>
    <physiologicalReaction direction="left-to-right" evidence="18">
        <dbReference type="Rhea" id="RHEA:53089"/>
    </physiologicalReaction>
</comment>
<comment type="cofactor">
    <cofactor evidence="1">
        <name>Mg(2+)</name>
        <dbReference type="ChEBI" id="CHEBI:18420"/>
    </cofactor>
    <text evidence="1">Binds 1 Mg(2+) ion per subunit.</text>
</comment>
<comment type="biophysicochemical properties">
    <kinetics>
        <KM evidence="6">108 uM for 2-hydroxy-17beta-estradiol (at 37 degrees Celsius)</KM>
        <KM evidence="6">24 uM for 4-hydroxy-17beta-estradiol (at 37 degrees Celsius)</KM>
        <KM evidence="6">74 uM for 2-hydroxyestrone (at 37 degrees Celsius)</KM>
        <KM evidence="6">53 uM for 4-hydroxyestrone (at 37 degrees Celsius)</KM>
        <text evidence="6">kcats are 6.8 min(-1), 3.4 min(-1), 3.3 min(-1) and 6.7 min(-1) with 2-hydroxy-17beta-estradiol, 4-hydroxy-17beta-estradiol, 2-hydroxyestrone and 4-hydroxyestrone as substrates, respectively.</text>
    </kinetics>
</comment>
<comment type="interaction">
    <interactant intactId="EBI-372265">
        <id>P21964</id>
    </interactant>
    <interactant intactId="EBI-10489564">
        <id>Q6P5T0</id>
        <label>AQP7</label>
    </interactant>
    <organismsDiffer>false</organismsDiffer>
    <experiments>3</experiments>
</comment>
<comment type="interaction">
    <interactant intactId="EBI-372265">
        <id>P21964</id>
    </interactant>
    <interactant intactId="EBI-11675746">
        <id>P30518</id>
        <label>AVPR2</label>
    </interactant>
    <organismsDiffer>false</organismsDiffer>
    <experiments>3</experiments>
</comment>
<comment type="interaction">
    <interactant intactId="EBI-372265">
        <id>P21964</id>
    </interactant>
    <interactant intactId="EBI-19947314">
        <id>Q8NFU1</id>
        <label>BEST2</label>
    </interactant>
    <organismsDiffer>false</organismsDiffer>
    <experiments>3</experiments>
</comment>
<comment type="interaction">
    <interactant intactId="EBI-372265">
        <id>P21964</id>
    </interactant>
    <interactant intactId="EBI-10271156">
        <id>Q8NHW4</id>
        <label>CCL4L2</label>
    </interactant>
    <organismsDiffer>false</organismsDiffer>
    <experiments>3</experiments>
</comment>
<comment type="interaction">
    <interactant intactId="EBI-372265">
        <id>P21964</id>
    </interactant>
    <interactant intactId="EBI-2835940">
        <id>P34972</id>
        <label>CNR2</label>
    </interactant>
    <organismsDiffer>false</organismsDiffer>
    <experiments>3</experiments>
</comment>
<comment type="interaction">
    <interactant intactId="EBI-372265">
        <id>P21964</id>
    </interactant>
    <interactant intactId="EBI-6942903">
        <id>Q96BA8</id>
        <label>CREB3L1</label>
    </interactant>
    <organismsDiffer>false</organismsDiffer>
    <experiments>3</experiments>
</comment>
<comment type="interaction">
    <interactant intactId="EBI-372265">
        <id>P21964</id>
    </interactant>
    <interactant intactId="EBI-489887">
        <id>P50402</id>
        <label>EMD</label>
    </interactant>
    <organismsDiffer>false</organismsDiffer>
    <experiments>3</experiments>
</comment>
<comment type="interaction">
    <interactant intactId="EBI-372265">
        <id>P21964</id>
    </interactant>
    <interactant intactId="EBI-18304435">
        <id>Q5JX71</id>
        <label>FAM209A</label>
    </interactant>
    <organismsDiffer>false</organismsDiffer>
    <experiments>3</experiments>
</comment>
<comment type="interaction">
    <interactant intactId="EBI-372265">
        <id>P21964</id>
    </interactant>
    <interactant intactId="EBI-17762181">
        <id>O14843</id>
        <label>FFAR3</label>
    </interactant>
    <organismsDiffer>false</organismsDiffer>
    <experiments>3</experiments>
</comment>
<comment type="interaction">
    <interactant intactId="EBI-372265">
        <id>P21964</id>
    </interactant>
    <interactant intactId="EBI-18908258">
        <id>O00258</id>
        <label>GET1</label>
    </interactant>
    <organismsDiffer>false</organismsDiffer>
    <experiments>3</experiments>
</comment>
<comment type="interaction">
    <interactant intactId="EBI-372265">
        <id>P21964</id>
    </interactant>
    <interactant intactId="EBI-17565645">
        <id>P08034</id>
        <label>GJB1</label>
    </interactant>
    <organismsDiffer>false</organismsDiffer>
    <experiments>3</experiments>
</comment>
<comment type="interaction">
    <interactant intactId="EBI-372265">
        <id>P21964</id>
    </interactant>
    <interactant intactId="EBI-3908586">
        <id>O75712</id>
        <label>GJB3</label>
    </interactant>
    <organismsDiffer>false</organismsDiffer>
    <experiments>3</experiments>
</comment>
<comment type="interaction">
    <interactant intactId="EBI-372265">
        <id>P21964</id>
    </interactant>
    <interactant intactId="EBI-12831526">
        <id>Q9NTQ9</id>
        <label>GJB4</label>
    </interactant>
    <organismsDiffer>false</organismsDiffer>
    <experiments>3</experiments>
</comment>
<comment type="interaction">
    <interactant intactId="EBI-372265">
        <id>P21964</id>
    </interactant>
    <interactant intactId="EBI-3909454">
        <id>O95377</id>
        <label>GJB5</label>
    </interactant>
    <organismsDiffer>false</organismsDiffer>
    <experiments>3</experiments>
</comment>
<comment type="interaction">
    <interactant intactId="EBI-372265">
        <id>P21964</id>
    </interactant>
    <interactant intactId="EBI-13345167">
        <id>Q8TDT2</id>
        <label>GPR152</label>
    </interactant>
    <organismsDiffer>false</organismsDiffer>
    <experiments>3</experiments>
</comment>
<comment type="interaction">
    <interactant intactId="EBI-372265">
        <id>P21964</id>
    </interactant>
    <interactant intactId="EBI-6255622">
        <id>Q8N6U8</id>
        <label>GPR161</label>
    </interactant>
    <organismsDiffer>false</organismsDiffer>
    <experiments>3</experiments>
</comment>
<comment type="interaction">
    <interactant intactId="EBI-372265">
        <id>P21964</id>
    </interactant>
    <interactant intactId="EBI-18076404">
        <id>O15529</id>
        <label>GPR42</label>
    </interactant>
    <organismsDiffer>false</organismsDiffer>
    <experiments>3</experiments>
</comment>
<comment type="interaction">
    <interactant intactId="EBI-372265">
        <id>P21964</id>
    </interactant>
    <interactant intactId="EBI-11427100">
        <id>P31937</id>
        <label>HIBADH</label>
    </interactant>
    <organismsDiffer>false</organismsDiffer>
    <experiments>3</experiments>
</comment>
<comment type="interaction">
    <interactant intactId="EBI-372265">
        <id>P21964</id>
    </interactant>
    <interactant intactId="EBI-3918847">
        <id>Q9H2F3</id>
        <label>HSD3B7</label>
    </interactant>
    <organismsDiffer>false</organismsDiffer>
    <experiments>3</experiments>
</comment>
<comment type="interaction">
    <interactant intactId="EBI-372265">
        <id>P21964</id>
    </interactant>
    <interactant intactId="EBI-3934936">
        <id>O95279</id>
        <label>KCNK5</label>
    </interactant>
    <organismsDiffer>false</organismsDiffer>
    <experiments>3</experiments>
</comment>
<comment type="interaction">
    <interactant intactId="EBI-372265">
        <id>P21964</id>
    </interactant>
    <interactant intactId="EBI-373355">
        <id>Q5SR56</id>
        <label>MFSD14B</label>
    </interactant>
    <organismsDiffer>false</organismsDiffer>
    <experiments>3</experiments>
</comment>
<comment type="interaction">
    <interactant intactId="EBI-372265">
        <id>P21964</id>
    </interactant>
    <interactant intactId="EBI-17641390">
        <id>A6NDP7</id>
        <label>MYADML2</label>
    </interactant>
    <organismsDiffer>false</organismsDiffer>
    <experiments>3</experiments>
</comment>
<comment type="interaction">
    <interactant intactId="EBI-372265">
        <id>P21964</id>
    </interactant>
    <interactant intactId="EBI-9550165">
        <id>Q0D2K0</id>
        <label>NIPAL4</label>
    </interactant>
    <organismsDiffer>false</organismsDiffer>
    <experiments>3</experiments>
</comment>
<comment type="interaction">
    <interactant intactId="EBI-372265">
        <id>P21964</id>
    </interactant>
    <interactant intactId="EBI-12853910">
        <id>Q7RTS5</id>
        <label>OTOP3</label>
    </interactant>
    <organismsDiffer>false</organismsDiffer>
    <experiments>3</experiments>
</comment>
<comment type="interaction">
    <interactant intactId="EBI-372265">
        <id>P21964</id>
    </interactant>
    <interactant intactId="EBI-12092917">
        <id>Q9UHJ9-5</id>
        <label>PGAP2</label>
    </interactant>
    <organismsDiffer>false</organismsDiffer>
    <experiments>3</experiments>
</comment>
<comment type="interaction">
    <interactant intactId="EBI-372265">
        <id>P21964</id>
    </interactant>
    <interactant intactId="EBI-11721828">
        <id>Q8IY26</id>
        <label>PLPP6</label>
    </interactant>
    <organismsDiffer>false</organismsDiffer>
    <experiments>3</experiments>
</comment>
<comment type="interaction">
    <interactant intactId="EBI-372265">
        <id>P21964</id>
    </interactant>
    <interactant intactId="EBI-7545592">
        <id>Q9H6H4</id>
        <label>REEP4</label>
    </interactant>
    <organismsDiffer>false</organismsDiffer>
    <experiments>3</experiments>
</comment>
<comment type="interaction">
    <interactant intactId="EBI-372265">
        <id>P21964</id>
    </interactant>
    <interactant intactId="EBI-17589229">
        <id>Q6NTF9-3</id>
        <label>RHBDD2</label>
    </interactant>
    <organismsDiffer>false</organismsDiffer>
    <experiments>3</experiments>
</comment>
<comment type="interaction">
    <interactant intactId="EBI-372265">
        <id>P21964</id>
    </interactant>
    <interactant intactId="EBI-12104986">
        <id>O75783</id>
        <label>RHBDL1</label>
    </interactant>
    <organismsDiffer>false</organismsDiffer>
    <experiments>3</experiments>
</comment>
<comment type="interaction">
    <interactant intactId="EBI-372265">
        <id>P21964</id>
    </interactant>
    <interactant intactId="EBI-10634734">
        <id>Q99500</id>
        <label>S1PR3</label>
    </interactant>
    <organismsDiffer>false</organismsDiffer>
    <experiments>3</experiments>
</comment>
<comment type="interaction">
    <interactant intactId="EBI-372265">
        <id>P21964</id>
    </interactant>
    <interactant intactId="EBI-9679163">
        <id>Q9Y6D0</id>
        <label>SELENOK</label>
    </interactant>
    <organismsDiffer>false</organismsDiffer>
    <experiments>3</experiments>
</comment>
<comment type="interaction">
    <interactant intactId="EBI-372265">
        <id>P21964</id>
    </interactant>
    <interactant intactId="EBI-18159983">
        <id>Q3KNW5</id>
        <label>SLC10A6</label>
    </interactant>
    <organismsDiffer>false</organismsDiffer>
    <experiments>3</experiments>
</comment>
<comment type="interaction">
    <interactant intactId="EBI-372265">
        <id>P21964</id>
    </interactant>
    <interactant intactId="EBI-3921243">
        <id>O60669</id>
        <label>SLC16A7</label>
    </interactant>
    <organismsDiffer>false</organismsDiffer>
    <experiments>3</experiments>
</comment>
<comment type="interaction">
    <interactant intactId="EBI-372265">
        <id>P21964</id>
    </interactant>
    <interactant intactId="EBI-2825135">
        <id>P22732</id>
        <label>SLC2A5</label>
    </interactant>
    <organismsDiffer>false</organismsDiffer>
    <experiments>3</experiments>
</comment>
<comment type="interaction">
    <interactant intactId="EBI-372265">
        <id>P21964</id>
    </interactant>
    <interactant intactId="EBI-12363689">
        <id>Q96G79</id>
        <label>SLC35A4</label>
    </interactant>
    <organismsDiffer>false</organismsDiffer>
    <experiments>3</experiments>
</comment>
<comment type="interaction">
    <interactant intactId="EBI-372265">
        <id>P21964</id>
    </interactant>
    <interactant intactId="EBI-13365456">
        <id>Q5T1Q4</id>
        <label>SLC35F1</label>
    </interactant>
    <organismsDiffer>false</organismsDiffer>
    <experiments>3</experiments>
</comment>
<comment type="interaction">
    <interactant intactId="EBI-372265">
        <id>P21964</id>
    </interactant>
    <interactant intactId="EBI-726491">
        <id>Q9NY26</id>
        <label>SLC39A1</label>
    </interactant>
    <organismsDiffer>false</organismsDiffer>
    <experiments>3</experiments>
</comment>
<comment type="interaction">
    <interactant intactId="EBI-372265">
        <id>P21964</id>
    </interactant>
    <interactant intactId="EBI-12898013">
        <id>Q9NP94</id>
        <label>SLC39A2</label>
    </interactant>
    <organismsDiffer>false</organismsDiffer>
    <experiments>3</experiments>
</comment>
<comment type="interaction">
    <interactant intactId="EBI-372265">
        <id>P21964</id>
    </interactant>
    <interactant intactId="EBI-1222191">
        <id>Q6P1K1</id>
        <label>SLC48A1</label>
    </interactant>
    <organismsDiffer>false</organismsDiffer>
    <experiments>3</experiments>
</comment>
<comment type="interaction">
    <interactant intactId="EBI-372265">
        <id>P21964</id>
    </interactant>
    <interactant intactId="EBI-4289564">
        <id>P30825</id>
        <label>SLC7A1</label>
    </interactant>
    <organismsDiffer>false</organismsDiffer>
    <experiments>3</experiments>
</comment>
<comment type="interaction">
    <interactant intactId="EBI-372265">
        <id>P21964</id>
    </interactant>
    <interactant intactId="EBI-13292283">
        <id>Q9UHI5</id>
        <label>SLC7A8</label>
    </interactant>
    <organismsDiffer>false</organismsDiffer>
    <experiments>3</experiments>
</comment>
<comment type="interaction">
    <interactant intactId="EBI-372265">
        <id>P21964</id>
    </interactant>
    <interactant intactId="EBI-12188413">
        <id>B2RUZ4</id>
        <label>SMIM1</label>
    </interactant>
    <organismsDiffer>false</organismsDiffer>
    <experiments>3</experiments>
</comment>
<comment type="interaction">
    <interactant intactId="EBI-372265">
        <id>P21964</id>
    </interactant>
    <interactant intactId="EBI-310962">
        <id>Q9UPZ6</id>
        <label>THSD7A</label>
    </interactant>
    <organismsDiffer>false</organismsDiffer>
    <experiments>3</experiments>
</comment>
<comment type="interaction">
    <interactant intactId="EBI-372265">
        <id>P21964</id>
    </interactant>
    <interactant intactId="EBI-12947623">
        <id>Q96MV1</id>
        <label>TLCD4</label>
    </interactant>
    <organismsDiffer>false</organismsDiffer>
    <experiments>3</experiments>
</comment>
<comment type="interaction">
    <interactant intactId="EBI-372265">
        <id>P21964</id>
    </interactant>
    <interactant intactId="EBI-8644968">
        <id>Q9NV29</id>
        <label>TMEM100</label>
    </interactant>
    <organismsDiffer>false</organismsDiffer>
    <experiments>3</experiments>
</comment>
<comment type="interaction">
    <interactant intactId="EBI-372265">
        <id>P21964</id>
    </interactant>
    <interactant intactId="EBI-10171534">
        <id>A0PK00</id>
        <label>TMEM120B</label>
    </interactant>
    <organismsDiffer>false</organismsDiffer>
    <experiments>3</experiments>
</comment>
<comment type="interaction">
    <interactant intactId="EBI-372265">
        <id>P21964</id>
    </interactant>
    <interactant intactId="EBI-8638294">
        <id>Q9NUH8</id>
        <label>TMEM14B</label>
    </interactant>
    <organismsDiffer>false</organismsDiffer>
    <experiments>3</experiments>
</comment>
<comment type="interaction">
    <interactant intactId="EBI-372265">
        <id>P21964</id>
    </interactant>
    <interactant intactId="EBI-2339195">
        <id>Q9P0S9</id>
        <label>TMEM14C</label>
    </interactant>
    <organismsDiffer>false</organismsDiffer>
    <experiments>3</experiments>
</comment>
<comment type="interaction">
    <interactant intactId="EBI-372265">
        <id>P21964</id>
    </interactant>
    <interactant intactId="EBI-13046724">
        <id>Q14656</id>
        <label>TMEM187</label>
    </interactant>
    <organismsDiffer>false</organismsDiffer>
    <experiments>3</experiments>
</comment>
<comment type="interaction">
    <interactant intactId="EBI-372265">
        <id>P21964</id>
    </interactant>
    <interactant intactId="EBI-6269551">
        <id>Q6UW68</id>
        <label>TMEM205</label>
    </interactant>
    <organismsDiffer>false</organismsDiffer>
    <experiments>4</experiments>
</comment>
<comment type="interaction">
    <interactant intactId="EBI-372265">
        <id>P21964</id>
    </interactant>
    <interactant intactId="EBI-347385">
        <id>Q9H0R3</id>
        <label>TMEM222</label>
    </interactant>
    <organismsDiffer>false</organismsDiffer>
    <experiments>3</experiments>
</comment>
<comment type="interaction">
    <interactant intactId="EBI-372265">
        <id>P21964</id>
    </interactant>
    <interactant intactId="EBI-12903814">
        <id>O95807</id>
        <label>TMEM50A</label>
    </interactant>
    <organismsDiffer>false</organismsDiffer>
    <experiments>3</experiments>
</comment>
<comment type="interaction">
    <interactant intactId="EBI-372265">
        <id>P21964</id>
    </interactant>
    <interactant intactId="EBI-18055230">
        <id>P34981</id>
        <label>TRHR</label>
    </interactant>
    <organismsDiffer>false</organismsDiffer>
    <experiments>3</experiments>
</comment>
<comment type="interaction">
    <interactant intactId="EBI-372265">
        <id>P21964</id>
    </interactant>
    <interactant intactId="EBI-358993">
        <id>Q15645</id>
        <label>TRIP13</label>
    </interactant>
    <organismsDiffer>false</organismsDiffer>
    <experiments>3</experiments>
</comment>
<comment type="interaction">
    <interactant intactId="EBI-372265">
        <id>P21964</id>
    </interactant>
    <interactant intactId="EBI-722343">
        <id>Q15836</id>
        <label>VAMP3</label>
    </interactant>
    <organismsDiffer>false</organismsDiffer>
    <experiments>3</experiments>
</comment>
<comment type="interaction">
    <interactant intactId="EBI-372265">
        <id>P21964</id>
    </interactant>
    <interactant intactId="EBI-10191195">
        <id>O95183</id>
        <label>VAMP5</label>
    </interactant>
    <organismsDiffer>false</organismsDiffer>
    <experiments>3</experiments>
</comment>
<comment type="interaction">
    <interactant intactId="EBI-372265">
        <id>P21964</id>
    </interactant>
    <interactant intactId="EBI-720609">
        <id>O76024</id>
        <label>WFS1</label>
    </interactant>
    <organismsDiffer>false</organismsDiffer>
    <experiments>3</experiments>
</comment>
<comment type="interaction">
    <interactant intactId="EBI-10200977">
        <id>P21964-2</id>
    </interactant>
    <interactant intactId="EBI-994813">
        <id>P30260</id>
        <label>CDC27</label>
    </interactant>
    <organismsDiffer>false</organismsDiffer>
    <experiments>3</experiments>
</comment>
<comment type="interaction">
    <interactant intactId="EBI-10200977">
        <id>P21964-2</id>
    </interactant>
    <interactant intactId="EBI-3508943">
        <id>Q9H816</id>
        <label>DCLRE1B</label>
    </interactant>
    <organismsDiffer>false</organismsDiffer>
    <experiments>3</experiments>
</comment>
<comment type="interaction">
    <interactant intactId="EBI-10200977">
        <id>P21964-2</id>
    </interactant>
    <interactant intactId="EBI-739789">
        <id>Q92997</id>
        <label>DVL3</label>
    </interactant>
    <organismsDiffer>false</organismsDiffer>
    <experiments>3</experiments>
</comment>
<comment type="interaction">
    <interactant intactId="EBI-10200977">
        <id>P21964-2</id>
    </interactant>
    <interactant intactId="EBI-25838727">
        <id>P29323-3</id>
        <label>EPHB2</label>
    </interactant>
    <organismsDiffer>false</organismsDiffer>
    <experiments>3</experiments>
</comment>
<comment type="interaction">
    <interactant intactId="EBI-10200977">
        <id>P21964-2</id>
    </interactant>
    <interactant intactId="EBI-348399">
        <id>P22607</id>
        <label>FGFR3</label>
    </interactant>
    <organismsDiffer>false</organismsDiffer>
    <experiments>3</experiments>
</comment>
<comment type="interaction">
    <interactant intactId="EBI-10200977">
        <id>P21964-2</id>
    </interactant>
    <interactant intactId="EBI-351506">
        <id>P06396</id>
        <label>GSN</label>
    </interactant>
    <organismsDiffer>false</organismsDiffer>
    <experiments>3</experiments>
</comment>
<comment type="interaction">
    <interactant intactId="EBI-10200977">
        <id>P21964-2</id>
    </interactant>
    <interactant intactId="EBI-948001">
        <id>Q15323</id>
        <label>KRT31</label>
    </interactant>
    <organismsDiffer>false</organismsDiffer>
    <experiments>3</experiments>
</comment>
<comment type="interaction">
    <interactant intactId="EBI-10200977">
        <id>P21964-2</id>
    </interactant>
    <interactant intactId="EBI-10171697">
        <id>Q6A162</id>
        <label>KRT40</label>
    </interactant>
    <organismsDiffer>false</organismsDiffer>
    <experiments>3</experiments>
</comment>
<comment type="interaction">
    <interactant intactId="EBI-10200977">
        <id>P21964-2</id>
    </interactant>
    <interactant intactId="EBI-3958099">
        <id>P26371</id>
        <label>KRTAP5-9</label>
    </interactant>
    <organismsDiffer>false</organismsDiffer>
    <experiments>3</experiments>
</comment>
<comment type="interaction">
    <interactant intactId="EBI-10200977">
        <id>P21964-2</id>
    </interactant>
    <interactant intactId="EBI-347619">
        <id>O15116</id>
        <label>LSM1</label>
    </interactant>
    <organismsDiffer>false</organismsDiffer>
    <experiments>3</experiments>
</comment>
<comment type="interaction">
    <interactant intactId="EBI-10200977">
        <id>P21964-2</id>
    </interactant>
    <interactant intactId="EBI-2907262">
        <id>P20645</id>
        <label>M6PR</label>
    </interactant>
    <organismsDiffer>false</organismsDiffer>
    <experiments>3</experiments>
</comment>
<comment type="interaction">
    <interactant intactId="EBI-10200977">
        <id>P21964-2</id>
    </interactant>
    <interactant intactId="EBI-351098">
        <id>O14744</id>
        <label>PRMT5</label>
    </interactant>
    <organismsDiffer>false</organismsDiffer>
    <experiments>3</experiments>
</comment>
<comment type="interaction">
    <interactant intactId="EBI-10200977">
        <id>P21964-2</id>
    </interactant>
    <interactant intactId="EBI-1050546">
        <id>Q5T160</id>
        <label>RARS2</label>
    </interactant>
    <organismsDiffer>false</organismsDiffer>
    <experiments>3</experiments>
</comment>
<comment type="interaction">
    <interactant intactId="EBI-10200977">
        <id>P21964-2</id>
    </interactant>
    <interactant intactId="EBI-3909436">
        <id>Q9UJD0</id>
        <label>RIMS3</label>
    </interactant>
    <organismsDiffer>false</organismsDiffer>
    <experiments>3</experiments>
</comment>
<comment type="interaction">
    <interactant intactId="EBI-10200977">
        <id>P21964-2</id>
    </interactant>
    <interactant intactId="EBI-10045219">
        <id>Q2MKA7</id>
        <label>RSPO1</label>
    </interactant>
    <organismsDiffer>false</organismsDiffer>
    <experiments>3</experiments>
</comment>
<comment type="interaction">
    <interactant intactId="EBI-10200977">
        <id>P21964-2</id>
    </interactant>
    <interactant intactId="EBI-752324">
        <id>Q8N488</id>
        <label>RYBP</label>
    </interactant>
    <organismsDiffer>false</organismsDiffer>
    <experiments>3</experiments>
</comment>
<comment type="interaction">
    <interactant intactId="EBI-10200977">
        <id>P21964-2</id>
    </interactant>
    <interactant intactId="EBI-6656171">
        <id>O75880</id>
        <label>SCO1</label>
    </interactant>
    <organismsDiffer>false</organismsDiffer>
    <experiments>3</experiments>
</comment>
<comment type="interaction">
    <interactant intactId="EBI-10200977">
        <id>P21964-2</id>
    </interactant>
    <interactant intactId="EBI-745901">
        <id>Q14141</id>
        <label>SEPTIN6</label>
    </interactant>
    <organismsDiffer>false</organismsDiffer>
    <experiments>3</experiments>
</comment>
<comment type="interaction">
    <interactant intactId="EBI-10200977">
        <id>P21964-2</id>
    </interactant>
    <interactant intactId="EBI-357085">
        <id>Q9UNE7</id>
        <label>STUB1</label>
    </interactant>
    <organismsDiffer>false</organismsDiffer>
    <experiments>3</experiments>
</comment>
<comment type="interaction">
    <interactant intactId="EBI-10200977">
        <id>P21964-2</id>
    </interactant>
    <interactant intactId="EBI-358993">
        <id>Q15645</id>
        <label>TRIP13</label>
    </interactant>
    <organismsDiffer>false</organismsDiffer>
    <experiments>3</experiments>
</comment>
<comment type="interaction">
    <interactant intactId="EBI-10200977">
        <id>P21964-2</id>
    </interactant>
    <interactant intactId="EBI-749211">
        <id>Q9NYH9</id>
        <label>UTP6</label>
    </interactant>
    <organismsDiffer>false</organismsDiffer>
    <experiments>3</experiments>
</comment>
<comment type="interaction">
    <interactant intactId="EBI-10200977">
        <id>P21964-2</id>
    </interactant>
    <interactant intactId="EBI-25835937">
        <id>Q8NA23-2</id>
        <label>WDR31</label>
    </interactant>
    <organismsDiffer>false</organismsDiffer>
    <experiments>3</experiments>
</comment>
<comment type="subcellular location">
    <molecule>Isoform Soluble</molecule>
    <subcellularLocation>
        <location evidence="6">Cytoplasm</location>
    </subcellularLocation>
</comment>
<comment type="subcellular location">
    <molecule>Isoform Membrane-bound</molecule>
    <subcellularLocation>
        <location evidence="13">Cell membrane</location>
        <topology evidence="13">Single-pass type II membrane protein</topology>
        <orientation evidence="13">Extracellular side</orientation>
    </subcellularLocation>
</comment>
<comment type="alternative products">
    <event type="alternative initiation"/>
    <isoform>
        <id>P21964-1</id>
        <name>Membrane-bound</name>
        <name>MB-COMT</name>
        <sequence type="displayed"/>
    </isoform>
    <isoform>
        <id>P21964-2</id>
        <name>Soluble</name>
        <name>S-COMT</name>
        <sequence type="described" ref="VSP_018778"/>
    </isoform>
</comment>
<comment type="tissue specificity">
    <text>Brain, liver, placenta, lymphocytes and erythrocytes.</text>
</comment>
<comment type="PTM">
    <text>The N-terminus is blocked.</text>
</comment>
<comment type="polymorphism">
    <text evidence="6 9 10 14">Two alleles, COMT*1 or COMT*H with Val-158 and COMT*2 or COMT*L with Met-158 are responsible for a three to four-fold difference in enzymatic activity.</text>
</comment>
<comment type="polymorphism">
    <text evidence="5">Low enzyme activity alleles are associated with genetic susceptibility to alcoholism [MIM:103780].</text>
</comment>
<comment type="disease" evidence="8">
    <disease id="DI-03626">
        <name>Schizophrenia</name>
        <acronym>SCZD</acronym>
        <description>A complex, multifactorial psychotic disorder or group of disorders characterized by disturbances in the form and content of thought (e.g. delusions, hallucinations), in mood (e.g. inappropriate affect), in sense of self and relationship to the external world (e.g. loss of ego boundaries, withdrawal), and in behavior (e.g bizarre or apparently purposeless behavior). Although it affects emotions, it is distinguished from mood disorders in which such disturbances are primary. Similarly, there may be mild impairment of cognitive function, and it is distinguished from the dementias in which disturbed cognitive function is considered primary. Some patients manifest schizophrenic as well as bipolar disorder symptoms and are often given the diagnosis of schizoaffective disorder.</description>
        <dbReference type="MIM" id="181500"/>
    </disease>
    <text>Disease susceptibility may be associated with variants affecting the gene represented in this entry.</text>
</comment>
<comment type="similarity">
    <text evidence="3">Belongs to the class I-like SAM-binding methyltransferase superfamily. Cation-dependent O-methyltransferase family.</text>
</comment>
<comment type="sequence caution" evidence="17">
    <conflict type="erroneous termination">
        <sequence resource="EMBL-CDS" id="AAH00419"/>
    </conflict>
    <text>Truncated C-terminus.</text>
</comment>
<comment type="sequence caution" evidence="17">
    <conflict type="erroneous termination">
        <sequence resource="EMBL-CDS" id="AAH05867"/>
    </conflict>
    <text>Truncated C-terminus.</text>
</comment>
<comment type="sequence caution" evidence="17">
    <conflict type="erroneous termination">
        <sequence resource="EMBL-CDS" id="ACI46037"/>
    </conflict>
    <text>Truncated C-terminus.</text>
</comment>
<comment type="online information" name="Wikipedia">
    <link uri="https://en.wikipedia.org/wiki/Catechol-O-methyl_transferase"/>
    <text>Catechol-O-methyl transferase entry</text>
</comment>
<keyword id="KW-0002">3D-structure</keyword>
<keyword id="KW-0024">Alternative initiation</keyword>
<keyword id="KW-0128">Catecholamine metabolism</keyword>
<keyword id="KW-1003">Cell membrane</keyword>
<keyword id="KW-0963">Cytoplasm</keyword>
<keyword id="KW-0903">Direct protein sequencing</keyword>
<keyword id="KW-0443">Lipid metabolism</keyword>
<keyword id="KW-0460">Magnesium</keyword>
<keyword id="KW-0472">Membrane</keyword>
<keyword id="KW-0479">Metal-binding</keyword>
<keyword id="KW-0489">Methyltransferase</keyword>
<keyword id="KW-0531">Neurotransmitter degradation</keyword>
<keyword id="KW-0597">Phosphoprotein</keyword>
<keyword id="KW-1267">Proteomics identification</keyword>
<keyword id="KW-1185">Reference proteome</keyword>
<keyword id="KW-0949">S-adenosyl-L-methionine</keyword>
<keyword id="KW-1211">Schizophrenia</keyword>
<keyword id="KW-0735">Signal-anchor</keyword>
<keyword id="KW-0808">Transferase</keyword>
<keyword id="KW-0812">Transmembrane</keyword>
<keyword id="KW-1133">Transmembrane helix</keyword>
<name>COMT_HUMAN</name>
<accession>P21964</accession>
<accession>A8MPV9</accession>
<accession>Q6IB07</accession>
<accession>Q6ICE6</accession>
<accession>Q9BWC7</accession>
<proteinExistence type="evidence at protein level"/>
<evidence type="ECO:0000250" key="1">
    <source>
        <dbReference type="UniProtKB" id="P22734"/>
    </source>
</evidence>
<evidence type="ECO:0000255" key="2"/>
<evidence type="ECO:0000255" key="3">
    <source>
        <dbReference type="PROSITE-ProRule" id="PRU01019"/>
    </source>
</evidence>
<evidence type="ECO:0000269" key="4">
    <source>
    </source>
</evidence>
<evidence type="ECO:0000269" key="5">
    <source>
    </source>
</evidence>
<evidence type="ECO:0000269" key="6">
    <source>
    </source>
</evidence>
<evidence type="ECO:0000269" key="7">
    <source>
    </source>
</evidence>
<evidence type="ECO:0000269" key="8">
    <source>
    </source>
</evidence>
<evidence type="ECO:0000269" key="9">
    <source>
    </source>
</evidence>
<evidence type="ECO:0000269" key="10">
    <source>
    </source>
</evidence>
<evidence type="ECO:0000269" key="11">
    <source>
    </source>
</evidence>
<evidence type="ECO:0000269" key="12">
    <source>
    </source>
</evidence>
<evidence type="ECO:0000269" key="13">
    <source>
    </source>
</evidence>
<evidence type="ECO:0000269" key="14">
    <source>
    </source>
</evidence>
<evidence type="ECO:0000269" key="15">
    <source ref="10"/>
</evidence>
<evidence type="ECO:0000269" key="16">
    <source ref="8"/>
</evidence>
<evidence type="ECO:0000305" key="17"/>
<evidence type="ECO:0000305" key="18">
    <source>
    </source>
</evidence>
<evidence type="ECO:0000312" key="19">
    <source>
        <dbReference type="HGNC" id="HGNC:2228"/>
    </source>
</evidence>
<evidence type="ECO:0007829" key="20">
    <source>
        <dbReference type="PDB" id="3BWY"/>
    </source>
</evidence>
<evidence type="ECO:0007829" key="21">
    <source>
        <dbReference type="PDB" id="4PYJ"/>
    </source>
</evidence>
<dbReference type="EC" id="2.1.1.6" evidence="6 8 13"/>
<dbReference type="EMBL" id="M65212">
    <property type="protein sequence ID" value="AAA68927.1"/>
    <property type="molecule type" value="mRNA"/>
</dbReference>
<dbReference type="EMBL" id="M65213">
    <property type="protein sequence ID" value="AAA68928.1"/>
    <property type="molecule type" value="mRNA"/>
</dbReference>
<dbReference type="EMBL" id="M58525">
    <property type="protein sequence ID" value="AAA68929.1"/>
    <property type="molecule type" value="mRNA"/>
</dbReference>
<dbReference type="EMBL" id="Z26491">
    <property type="protein sequence ID" value="CAA81263.1"/>
    <property type="molecule type" value="Genomic_DNA"/>
</dbReference>
<dbReference type="EMBL" id="FJ224345">
    <property type="protein sequence ID" value="ACI46037.1"/>
    <property type="status" value="ALT_TERM"/>
    <property type="molecule type" value="mRNA"/>
</dbReference>
<dbReference type="EMBL" id="AK290440">
    <property type="protein sequence ID" value="BAF83129.1"/>
    <property type="molecule type" value="mRNA"/>
</dbReference>
<dbReference type="EMBL" id="CR456422">
    <property type="protein sequence ID" value="CAG30308.1"/>
    <property type="molecule type" value="mRNA"/>
</dbReference>
<dbReference type="EMBL" id="CR456997">
    <property type="protein sequence ID" value="CAG33278.1"/>
    <property type="molecule type" value="mRNA"/>
</dbReference>
<dbReference type="EMBL" id="AY341246">
    <property type="protein sequence ID" value="AAP88929.1"/>
    <property type="molecule type" value="Genomic_DNA"/>
</dbReference>
<dbReference type="EMBL" id="AC000080">
    <property type="status" value="NOT_ANNOTATED_CDS"/>
    <property type="molecule type" value="Genomic_DNA"/>
</dbReference>
<dbReference type="EMBL" id="AC000090">
    <property type="status" value="NOT_ANNOTATED_CDS"/>
    <property type="molecule type" value="Genomic_DNA"/>
</dbReference>
<dbReference type="EMBL" id="AC005663">
    <property type="status" value="NOT_ANNOTATED_CDS"/>
    <property type="molecule type" value="Genomic_DNA"/>
</dbReference>
<dbReference type="EMBL" id="CH471176">
    <property type="protein sequence ID" value="EAX03010.1"/>
    <property type="molecule type" value="Genomic_DNA"/>
</dbReference>
<dbReference type="EMBL" id="BC000419">
    <property type="protein sequence ID" value="AAH00419.2"/>
    <property type="status" value="ALT_TERM"/>
    <property type="molecule type" value="mRNA"/>
</dbReference>
<dbReference type="EMBL" id="BC005867">
    <property type="protein sequence ID" value="AAH05867.1"/>
    <property type="status" value="ALT_TERM"/>
    <property type="molecule type" value="mRNA"/>
</dbReference>
<dbReference type="EMBL" id="BC011935">
    <property type="protein sequence ID" value="AAH11935.1"/>
    <property type="molecule type" value="mRNA"/>
</dbReference>
<dbReference type="EMBL" id="BC100018">
    <property type="protein sequence ID" value="AAI00019.1"/>
    <property type="molecule type" value="mRNA"/>
</dbReference>
<dbReference type="CCDS" id="CCDS13770.1">
    <molecule id="P21964-1"/>
</dbReference>
<dbReference type="CCDS" id="CCDS46663.1">
    <molecule id="P21964-2"/>
</dbReference>
<dbReference type="PIR" id="I37256">
    <property type="entry name" value="A38459"/>
</dbReference>
<dbReference type="RefSeq" id="NP_000745.1">
    <molecule id="P21964-1"/>
    <property type="nucleotide sequence ID" value="NM_000754.4"/>
</dbReference>
<dbReference type="RefSeq" id="NP_001128633.1">
    <molecule id="P21964-1"/>
    <property type="nucleotide sequence ID" value="NM_001135161.2"/>
</dbReference>
<dbReference type="RefSeq" id="NP_001128634.1">
    <molecule id="P21964-1"/>
    <property type="nucleotide sequence ID" value="NM_001135162.2"/>
</dbReference>
<dbReference type="RefSeq" id="NP_001349757.1">
    <molecule id="P21964-1"/>
    <property type="nucleotide sequence ID" value="NM_001362828.2"/>
</dbReference>
<dbReference type="RefSeq" id="NP_009294.1">
    <molecule id="P21964-2"/>
    <property type="nucleotide sequence ID" value="NM_007310.3"/>
</dbReference>
<dbReference type="RefSeq" id="XP_016884083.1">
    <property type="nucleotide sequence ID" value="XM_017028594.1"/>
</dbReference>
<dbReference type="RefSeq" id="XP_016884084.1">
    <property type="nucleotide sequence ID" value="XM_017028595.1"/>
</dbReference>
<dbReference type="PDB" id="3A7E">
    <property type="method" value="X-ray"/>
    <property type="resolution" value="2.80 A"/>
    <property type="chains" value="A=51-264"/>
</dbReference>
<dbReference type="PDB" id="3BWM">
    <property type="method" value="X-ray"/>
    <property type="resolution" value="1.98 A"/>
    <property type="chains" value="A=52-265"/>
</dbReference>
<dbReference type="PDB" id="3BWY">
    <property type="method" value="X-ray"/>
    <property type="resolution" value="1.30 A"/>
    <property type="chains" value="A=52-265"/>
</dbReference>
<dbReference type="PDB" id="4PYI">
    <property type="method" value="X-ray"/>
    <property type="resolution" value="1.35 A"/>
    <property type="chains" value="A=51-271"/>
</dbReference>
<dbReference type="PDB" id="4PYJ">
    <property type="method" value="X-ray"/>
    <property type="resolution" value="1.90 A"/>
    <property type="chains" value="A=51-271"/>
</dbReference>
<dbReference type="PDB" id="4PYK">
    <property type="method" value="X-ray"/>
    <property type="resolution" value="2.22 A"/>
    <property type="chains" value="A=51-271"/>
</dbReference>
<dbReference type="PDB" id="4XUC">
    <property type="method" value="X-ray"/>
    <property type="resolution" value="1.80 A"/>
    <property type="chains" value="A=48-265"/>
</dbReference>
<dbReference type="PDB" id="4XUD">
    <property type="method" value="X-ray"/>
    <property type="resolution" value="2.40 A"/>
    <property type="chains" value="A=48-265"/>
</dbReference>
<dbReference type="PDB" id="4XUE">
    <property type="method" value="X-ray"/>
    <property type="resolution" value="2.30 A"/>
    <property type="chains" value="A/B=52-265"/>
</dbReference>
<dbReference type="PDB" id="5LSA">
    <property type="method" value="X-ray"/>
    <property type="resolution" value="1.50 A"/>
    <property type="chains" value="A=51-271"/>
</dbReference>
<dbReference type="PDB" id="6I3C">
    <property type="method" value="X-ray"/>
    <property type="resolution" value="1.34 A"/>
    <property type="chains" value="A=52-271"/>
</dbReference>
<dbReference type="PDB" id="6I3D">
    <property type="method" value="X-ray"/>
    <property type="resolution" value="1.45 A"/>
    <property type="chains" value="A/B=52-271"/>
</dbReference>
<dbReference type="PDBsum" id="3A7E"/>
<dbReference type="PDBsum" id="3BWM"/>
<dbReference type="PDBsum" id="3BWY"/>
<dbReference type="PDBsum" id="4PYI"/>
<dbReference type="PDBsum" id="4PYJ"/>
<dbReference type="PDBsum" id="4PYK"/>
<dbReference type="PDBsum" id="4XUC"/>
<dbReference type="PDBsum" id="4XUD"/>
<dbReference type="PDBsum" id="4XUE"/>
<dbReference type="PDBsum" id="5LSA"/>
<dbReference type="PDBsum" id="6I3C"/>
<dbReference type="PDBsum" id="6I3D"/>
<dbReference type="SMR" id="P21964"/>
<dbReference type="BioGRID" id="107707">
    <property type="interactions" value="178"/>
</dbReference>
<dbReference type="FunCoup" id="P21964">
    <property type="interactions" value="648"/>
</dbReference>
<dbReference type="IntAct" id="P21964">
    <property type="interactions" value="133"/>
</dbReference>
<dbReference type="MINT" id="P21964"/>
<dbReference type="STRING" id="9606.ENSP00000354511"/>
<dbReference type="BindingDB" id="P21964"/>
<dbReference type="ChEMBL" id="CHEMBL2023"/>
<dbReference type="DrugBank" id="DB07462">
    <property type="generic name" value="(3,4-DIHYDROXY-2-NITROPHENYL)(PHENYL)METHANONE"/>
</dbReference>
<dbReference type="DrugBank" id="DB02342">
    <property type="generic name" value="2-Methoxyestradiol"/>
</dbReference>
<dbReference type="DrugBank" id="DB02105">
    <property type="generic name" value="3,5-Dinitrocatechol"/>
</dbReference>
<dbReference type="DrugBank" id="DB08049">
    <property type="generic name" value="7,8-dihydroxy-4-phenyl-2H-chromen-2-one"/>
</dbReference>
<dbReference type="DrugBank" id="DB00118">
    <property type="generic name" value="Ademetionine"/>
</dbReference>
<dbReference type="DrugBank" id="DB00714">
    <property type="generic name" value="Apomorphine"/>
</dbReference>
<dbReference type="DrugBank" id="DB03336">
    <property type="generic name" value="BIA"/>
</dbReference>
<dbReference type="DrugBank" id="DB00286">
    <property type="generic name" value="Conjugated estrogens"/>
</dbReference>
<dbReference type="DrugBank" id="DB00255">
    <property type="generic name" value="Diethylstilbestrol"/>
</dbReference>
<dbReference type="DrugBank" id="DB00841">
    <property type="generic name" value="Dobutamine"/>
</dbReference>
<dbReference type="DrugBank" id="DB00988">
    <property type="generic name" value="Dopamine"/>
</dbReference>
<dbReference type="DrugBank" id="DB15488">
    <property type="generic name" value="Echinacoside"/>
</dbReference>
<dbReference type="DrugBank" id="DB00494">
    <property type="generic name" value="Entacapone"/>
</dbReference>
<dbReference type="DrugBank" id="DB00668">
    <property type="generic name" value="Epinephrine"/>
</dbReference>
<dbReference type="DrugBank" id="DB00783">
    <property type="generic name" value="Estradiol"/>
</dbReference>
<dbReference type="DrugBank" id="DB00977">
    <property type="generic name" value="Ethinylestradiol"/>
</dbReference>
<dbReference type="DrugBank" id="DB01064">
    <property type="generic name" value="Isoprenaline"/>
</dbReference>
<dbReference type="DrugBank" id="DB00968">
    <property type="generic name" value="Methyldopa"/>
</dbReference>
<dbReference type="DrugBank" id="DB01141">
    <property type="generic name" value="Micafungin"/>
</dbReference>
<dbReference type="DrugBank" id="DB03907">
    <property type="generic name" value="N-[(E)-3-[(2R,3S,4R,5R)-5-(6-Aminopurin-9-yl)-3,4-dihydroxyoxolan-2-yl]prop-2-enyl]-2,3-dihydroxy-5-nitrobenzamide"/>
</dbReference>
<dbReference type="DrugBank" id="DB14849">
    <property type="generic name" value="Nebicapone"/>
</dbReference>
<dbReference type="DrugBank" id="DB04820">
    <property type="generic name" value="Nialamide"/>
</dbReference>
<dbReference type="DrugBank" id="DB06152">
    <property type="generic name" value="Nylidrin"/>
</dbReference>
<dbReference type="DrugBank" id="DB11632">
    <property type="generic name" value="Opicapone"/>
</dbReference>
<dbReference type="DrugBank" id="DB00252">
    <property type="generic name" value="Phenytoin"/>
</dbReference>
<dbReference type="DrugBank" id="DB01420">
    <property type="generic name" value="Testosterone propionate"/>
</dbReference>
<dbReference type="DrugBank" id="DB00323">
    <property type="generic name" value="Tolcapone"/>
</dbReference>
<dbReference type="DrugCentral" id="P21964"/>
<dbReference type="GuidetoPHARMACOLOGY" id="2472"/>
<dbReference type="SwissLipids" id="SLP:000001714">
    <molecule id="P21964-2"/>
</dbReference>
<dbReference type="GlyGen" id="P21964">
    <property type="glycosylation" value="2 sites, 1 O-linked glycan (1 site)"/>
</dbReference>
<dbReference type="iPTMnet" id="P21964"/>
<dbReference type="MetOSite" id="P21964"/>
<dbReference type="PhosphoSitePlus" id="P21964"/>
<dbReference type="SwissPalm" id="P21964"/>
<dbReference type="BioMuta" id="COMT"/>
<dbReference type="DMDM" id="116907"/>
<dbReference type="REPRODUCTION-2DPAGE" id="IPI00375513"/>
<dbReference type="CPTAC" id="CPTAC-482"/>
<dbReference type="CPTAC" id="CPTAC-483"/>
<dbReference type="jPOST" id="P21964"/>
<dbReference type="MassIVE" id="P21964"/>
<dbReference type="PaxDb" id="9606-ENSP00000354511"/>
<dbReference type="PeptideAtlas" id="P21964"/>
<dbReference type="PRIDE" id="P21964"/>
<dbReference type="ProteomicsDB" id="53945">
    <molecule id="P21964-1"/>
</dbReference>
<dbReference type="ProteomicsDB" id="53946">
    <molecule id="P21964-2"/>
</dbReference>
<dbReference type="Pumba" id="P21964"/>
<dbReference type="TopDownProteomics" id="P21964-1">
    <molecule id="P21964-1"/>
</dbReference>
<dbReference type="TopDownProteomics" id="P21964-2">
    <molecule id="P21964-2"/>
</dbReference>
<dbReference type="Antibodypedia" id="213">
    <property type="antibodies" value="654 antibodies from 40 providers"/>
</dbReference>
<dbReference type="DNASU" id="1312"/>
<dbReference type="Ensembl" id="ENST00000361682.11">
    <molecule id="P21964-1"/>
    <property type="protein sequence ID" value="ENSP00000354511.6"/>
    <property type="gene ID" value="ENSG00000093010.15"/>
</dbReference>
<dbReference type="Ensembl" id="ENST00000403710.5">
    <molecule id="P21964-1"/>
    <property type="protein sequence ID" value="ENSP00000385917.1"/>
    <property type="gene ID" value="ENSG00000093010.15"/>
</dbReference>
<dbReference type="Ensembl" id="ENST00000406520.7">
    <molecule id="P21964-1"/>
    <property type="protein sequence ID" value="ENSP00000385150.3"/>
    <property type="gene ID" value="ENSG00000093010.15"/>
</dbReference>
<dbReference type="Ensembl" id="ENST00000407537.5">
    <molecule id="P21964-1"/>
    <property type="protein sequence ID" value="ENSP00000384654.2"/>
    <property type="gene ID" value="ENSG00000093010.15"/>
</dbReference>
<dbReference type="Ensembl" id="ENST00000449653.5">
    <molecule id="P21964-2"/>
    <property type="protein sequence ID" value="ENSP00000416778.1"/>
    <property type="gene ID" value="ENSG00000093010.15"/>
</dbReference>
<dbReference type="Ensembl" id="ENST00000676678.1">
    <molecule id="P21964-1"/>
    <property type="protein sequence ID" value="ENSP00000503719.1"/>
    <property type="gene ID" value="ENSG00000093010.15"/>
</dbReference>
<dbReference type="Ensembl" id="ENST00000678255.1">
    <molecule id="P21964-1"/>
    <property type="protein sequence ID" value="ENSP00000504402.1"/>
    <property type="gene ID" value="ENSG00000093010.15"/>
</dbReference>
<dbReference type="Ensembl" id="ENST00000678868.1">
    <molecule id="P21964-1"/>
    <property type="protein sequence ID" value="ENSP00000503583.1"/>
    <property type="gene ID" value="ENSG00000093010.15"/>
</dbReference>
<dbReference type="GeneID" id="1312"/>
<dbReference type="KEGG" id="hsa:1312"/>
<dbReference type="MANE-Select" id="ENST00000361682.11">
    <property type="protein sequence ID" value="ENSP00000354511.6"/>
    <property type="RefSeq nucleotide sequence ID" value="NM_000754.4"/>
    <property type="RefSeq protein sequence ID" value="NP_000745.1"/>
</dbReference>
<dbReference type="UCSC" id="uc002zqu.4">
    <molecule id="P21964-1"/>
    <property type="organism name" value="human"/>
</dbReference>
<dbReference type="AGR" id="HGNC:2228"/>
<dbReference type="CTD" id="1312"/>
<dbReference type="DisGeNET" id="1312"/>
<dbReference type="GeneCards" id="COMT"/>
<dbReference type="HGNC" id="HGNC:2228">
    <property type="gene designation" value="COMT"/>
</dbReference>
<dbReference type="HPA" id="ENSG00000093010">
    <property type="expression patterns" value="Low tissue specificity"/>
</dbReference>
<dbReference type="MalaCards" id="COMT"/>
<dbReference type="MIM" id="103780">
    <property type="type" value="phenotype"/>
</dbReference>
<dbReference type="MIM" id="116790">
    <property type="type" value="gene+phenotype"/>
</dbReference>
<dbReference type="MIM" id="181500">
    <property type="type" value="phenotype"/>
</dbReference>
<dbReference type="neXtProt" id="NX_P21964"/>
<dbReference type="OpenTargets" id="ENSG00000093010"/>
<dbReference type="Orphanet" id="567">
    <property type="disease" value="22q11.2 deletion syndrome"/>
</dbReference>
<dbReference type="PharmGKB" id="PA117"/>
<dbReference type="VEuPathDB" id="HostDB:ENSG00000093010"/>
<dbReference type="eggNOG" id="KOG1663">
    <property type="taxonomic scope" value="Eukaryota"/>
</dbReference>
<dbReference type="GeneTree" id="ENSGT00940000155317"/>
<dbReference type="HOGENOM" id="CLU_050461_5_0_1"/>
<dbReference type="InParanoid" id="P21964"/>
<dbReference type="OMA" id="VEITRCV"/>
<dbReference type="OrthoDB" id="186626at2759"/>
<dbReference type="PAN-GO" id="P21964">
    <property type="GO annotations" value="7 GO annotations based on evolutionary models"/>
</dbReference>
<dbReference type="PhylomeDB" id="P21964"/>
<dbReference type="TreeFam" id="TF329140"/>
<dbReference type="BioCyc" id="MetaCyc:HS01791-MONOMER"/>
<dbReference type="BRENDA" id="2.1.1.6">
    <property type="organism ID" value="2681"/>
</dbReference>
<dbReference type="PathwayCommons" id="P21964"/>
<dbReference type="Reactome" id="R-HSA-156581">
    <property type="pathway name" value="Methylation"/>
</dbReference>
<dbReference type="Reactome" id="R-HSA-379397">
    <property type="pathway name" value="Enzymatic degradation of dopamine by COMT"/>
</dbReference>
<dbReference type="Reactome" id="R-HSA-379398">
    <property type="pathway name" value="Enzymatic degradation of Dopamine by monoamine oxidase"/>
</dbReference>
<dbReference type="Reactome" id="R-HSA-9679191">
    <property type="pathway name" value="Potential therapeutics for SARS"/>
</dbReference>
<dbReference type="SignaLink" id="P21964"/>
<dbReference type="SIGNOR" id="P21964"/>
<dbReference type="BioGRID-ORCS" id="1312">
    <property type="hits" value="27 hits in 1169 CRISPR screens"/>
</dbReference>
<dbReference type="CD-CODE" id="8C2F96ED">
    <property type="entry name" value="Centrosome"/>
</dbReference>
<dbReference type="ChiTaRS" id="COMT">
    <property type="organism name" value="human"/>
</dbReference>
<dbReference type="EvolutionaryTrace" id="P21964"/>
<dbReference type="GeneWiki" id="Catechol-O-methyl_transferase"/>
<dbReference type="GenomeRNAi" id="1312"/>
<dbReference type="Pharos" id="P21964">
    <property type="development level" value="Tclin"/>
</dbReference>
<dbReference type="PRO" id="PR:P21964"/>
<dbReference type="Proteomes" id="UP000005640">
    <property type="component" value="Chromosome 22"/>
</dbReference>
<dbReference type="RNAct" id="P21964">
    <property type="molecule type" value="protein"/>
</dbReference>
<dbReference type="Bgee" id="ENSG00000093010">
    <property type="expression patterns" value="Expressed in right adrenal gland cortex and 207 other cell types or tissues"/>
</dbReference>
<dbReference type="ExpressionAtlas" id="P21964">
    <property type="expression patterns" value="baseline and differential"/>
</dbReference>
<dbReference type="GO" id="GO:0030424">
    <property type="term" value="C:axon"/>
    <property type="evidence" value="ECO:0000318"/>
    <property type="project" value="GO_Central"/>
</dbReference>
<dbReference type="GO" id="GO:0005829">
    <property type="term" value="C:cytosol"/>
    <property type="evidence" value="ECO:0000314"/>
    <property type="project" value="UniProtKB"/>
</dbReference>
<dbReference type="GO" id="GO:0030425">
    <property type="term" value="C:dendrite"/>
    <property type="evidence" value="ECO:0000318"/>
    <property type="project" value="GO_Central"/>
</dbReference>
<dbReference type="GO" id="GO:0070062">
    <property type="term" value="C:extracellular exosome"/>
    <property type="evidence" value="ECO:0007005"/>
    <property type="project" value="UniProtKB"/>
</dbReference>
<dbReference type="GO" id="GO:0043231">
    <property type="term" value="C:intracellular membrane-bounded organelle"/>
    <property type="evidence" value="ECO:0000314"/>
    <property type="project" value="HPA"/>
</dbReference>
<dbReference type="GO" id="GO:0016020">
    <property type="term" value="C:membrane"/>
    <property type="evidence" value="ECO:0007005"/>
    <property type="project" value="UniProtKB"/>
</dbReference>
<dbReference type="GO" id="GO:0005886">
    <property type="term" value="C:plasma membrane"/>
    <property type="evidence" value="ECO:0000304"/>
    <property type="project" value="Reactome"/>
</dbReference>
<dbReference type="GO" id="GO:0045202">
    <property type="term" value="C:synapse"/>
    <property type="evidence" value="ECO:0007669"/>
    <property type="project" value="GOC"/>
</dbReference>
<dbReference type="GO" id="GO:0016206">
    <property type="term" value="F:catechol O-methyltransferase activity"/>
    <property type="evidence" value="ECO:0000314"/>
    <property type="project" value="UniProtKB"/>
</dbReference>
<dbReference type="GO" id="GO:0000287">
    <property type="term" value="F:magnesium ion binding"/>
    <property type="evidence" value="ECO:0007669"/>
    <property type="project" value="InterPro"/>
</dbReference>
<dbReference type="GO" id="GO:0008168">
    <property type="term" value="F:methyltransferase activity"/>
    <property type="evidence" value="ECO:0000304"/>
    <property type="project" value="Reactome"/>
</dbReference>
<dbReference type="GO" id="GO:0008171">
    <property type="term" value="F:O-methyltransferase activity"/>
    <property type="evidence" value="ECO:0000304"/>
    <property type="project" value="ProtInc"/>
</dbReference>
<dbReference type="GO" id="GO:0060840">
    <property type="term" value="P:artery development"/>
    <property type="evidence" value="ECO:0007669"/>
    <property type="project" value="Ensembl"/>
</dbReference>
<dbReference type="GO" id="GO:0001662">
    <property type="term" value="P:behavioral fear response"/>
    <property type="evidence" value="ECO:0007669"/>
    <property type="project" value="Ensembl"/>
</dbReference>
<dbReference type="GO" id="GO:0042424">
    <property type="term" value="P:catecholamine catabolic process"/>
    <property type="evidence" value="ECO:0000314"/>
    <property type="project" value="UniProtKB"/>
</dbReference>
<dbReference type="GO" id="GO:0071314">
    <property type="term" value="P:cellular response to cocaine"/>
    <property type="evidence" value="ECO:0007669"/>
    <property type="project" value="Ensembl"/>
</dbReference>
<dbReference type="GO" id="GO:0016036">
    <property type="term" value="P:cellular response to phosphate starvation"/>
    <property type="evidence" value="ECO:0007669"/>
    <property type="project" value="Ensembl"/>
</dbReference>
<dbReference type="GO" id="GO:0021696">
    <property type="term" value="P:cerebellar cortex morphogenesis"/>
    <property type="evidence" value="ECO:0007669"/>
    <property type="project" value="Ensembl"/>
</dbReference>
<dbReference type="GO" id="GO:0033344">
    <property type="term" value="P:cholesterol efflux"/>
    <property type="evidence" value="ECO:0007669"/>
    <property type="project" value="Ensembl"/>
</dbReference>
<dbReference type="GO" id="GO:0050965">
    <property type="term" value="P:detection of temperature stimulus involved in sensory perception of pain"/>
    <property type="evidence" value="ECO:0007669"/>
    <property type="project" value="Ensembl"/>
</dbReference>
<dbReference type="GO" id="GO:0032502">
    <property type="term" value="P:developmental process"/>
    <property type="evidence" value="ECO:0000318"/>
    <property type="project" value="GO_Central"/>
</dbReference>
<dbReference type="GO" id="GO:0042420">
    <property type="term" value="P:dopamine catabolic process"/>
    <property type="evidence" value="ECO:0000304"/>
    <property type="project" value="Reactome"/>
</dbReference>
<dbReference type="GO" id="GO:0042417">
    <property type="term" value="P:dopamine metabolic process"/>
    <property type="evidence" value="ECO:0000318"/>
    <property type="project" value="GO_Central"/>
</dbReference>
<dbReference type="GO" id="GO:0014046">
    <property type="term" value="P:dopamine secretion"/>
    <property type="evidence" value="ECO:0007669"/>
    <property type="project" value="Ensembl"/>
</dbReference>
<dbReference type="GO" id="GO:0035640">
    <property type="term" value="P:exploration behavior"/>
    <property type="evidence" value="ECO:0007669"/>
    <property type="project" value="Ensembl"/>
</dbReference>
<dbReference type="GO" id="GO:0010467">
    <property type="term" value="P:gene expression"/>
    <property type="evidence" value="ECO:0007669"/>
    <property type="project" value="Ensembl"/>
</dbReference>
<dbReference type="GO" id="GO:0032835">
    <property type="term" value="P:glomerulus development"/>
    <property type="evidence" value="ECO:0007669"/>
    <property type="project" value="Ensembl"/>
</dbReference>
<dbReference type="GO" id="GO:0005977">
    <property type="term" value="P:glycogen metabolic process"/>
    <property type="evidence" value="ECO:0007669"/>
    <property type="project" value="Ensembl"/>
</dbReference>
<dbReference type="GO" id="GO:0046959">
    <property type="term" value="P:habituation"/>
    <property type="evidence" value="ECO:0007669"/>
    <property type="project" value="Ensembl"/>
</dbReference>
<dbReference type="GO" id="GO:0071626">
    <property type="term" value="P:mastication"/>
    <property type="evidence" value="ECO:0007669"/>
    <property type="project" value="Ensembl"/>
</dbReference>
<dbReference type="GO" id="GO:0007613">
    <property type="term" value="P:memory"/>
    <property type="evidence" value="ECO:0007669"/>
    <property type="project" value="Ensembl"/>
</dbReference>
<dbReference type="GO" id="GO:0032259">
    <property type="term" value="P:methylation"/>
    <property type="evidence" value="ECO:0000314"/>
    <property type="project" value="UniProtKB"/>
</dbReference>
<dbReference type="GO" id="GO:0035264">
    <property type="term" value="P:multicellular organism growth"/>
    <property type="evidence" value="ECO:0007669"/>
    <property type="project" value="Ensembl"/>
</dbReference>
<dbReference type="GO" id="GO:0042415">
    <property type="term" value="P:norepinephrine metabolic process"/>
    <property type="evidence" value="ECO:0007669"/>
    <property type="project" value="Ensembl"/>
</dbReference>
<dbReference type="GO" id="GO:0048243">
    <property type="term" value="P:norepinephrine secretion"/>
    <property type="evidence" value="ECO:0007669"/>
    <property type="project" value="Ensembl"/>
</dbReference>
<dbReference type="GO" id="GO:0006693">
    <property type="term" value="P:prostaglandin metabolic process"/>
    <property type="evidence" value="ECO:0007669"/>
    <property type="project" value="Ensembl"/>
</dbReference>
<dbReference type="GO" id="GO:0097018">
    <property type="term" value="P:renal albumin absorption"/>
    <property type="evidence" value="ECO:0007669"/>
    <property type="project" value="Ensembl"/>
</dbReference>
<dbReference type="GO" id="GO:0097205">
    <property type="term" value="P:renal filtration"/>
    <property type="evidence" value="ECO:0007669"/>
    <property type="project" value="Ensembl"/>
</dbReference>
<dbReference type="GO" id="GO:0035812">
    <property type="term" value="P:renal sodium excretion"/>
    <property type="evidence" value="ECO:0007669"/>
    <property type="project" value="Ensembl"/>
</dbReference>
<dbReference type="GO" id="GO:0002001">
    <property type="term" value="P:renin secretion into blood stream"/>
    <property type="evidence" value="ECO:0007669"/>
    <property type="project" value="Ensembl"/>
</dbReference>
<dbReference type="GO" id="GO:0001975">
    <property type="term" value="P:response to amphetamine"/>
    <property type="evidence" value="ECO:0007669"/>
    <property type="project" value="Ensembl"/>
</dbReference>
<dbReference type="GO" id="GO:1990776">
    <property type="term" value="P:response to angiotensin"/>
    <property type="evidence" value="ECO:0007669"/>
    <property type="project" value="Ensembl"/>
</dbReference>
<dbReference type="GO" id="GO:0051412">
    <property type="term" value="P:response to corticosterone"/>
    <property type="evidence" value="ECO:0007669"/>
    <property type="project" value="Ensembl"/>
</dbReference>
<dbReference type="GO" id="GO:0034097">
    <property type="term" value="P:response to cytokine"/>
    <property type="evidence" value="ECO:0007669"/>
    <property type="project" value="Ensembl"/>
</dbReference>
<dbReference type="GO" id="GO:1903350">
    <property type="term" value="P:response to dopamine"/>
    <property type="evidence" value="ECO:0007669"/>
    <property type="project" value="Ensembl"/>
</dbReference>
<dbReference type="GO" id="GO:0032094">
    <property type="term" value="P:response to food"/>
    <property type="evidence" value="ECO:0007669"/>
    <property type="project" value="Ensembl"/>
</dbReference>
<dbReference type="GO" id="GO:0001666">
    <property type="term" value="P:response to hypoxia"/>
    <property type="evidence" value="ECO:0007669"/>
    <property type="project" value="Ensembl"/>
</dbReference>
<dbReference type="GO" id="GO:0006979">
    <property type="term" value="P:response to oxidative stress"/>
    <property type="evidence" value="ECO:0007669"/>
    <property type="project" value="Ensembl"/>
</dbReference>
<dbReference type="GO" id="GO:1902074">
    <property type="term" value="P:response to salt"/>
    <property type="evidence" value="ECO:0007669"/>
    <property type="project" value="Ensembl"/>
</dbReference>
<dbReference type="GO" id="GO:0009636">
    <property type="term" value="P:response to toxic substance"/>
    <property type="evidence" value="ECO:0007669"/>
    <property type="project" value="Ensembl"/>
</dbReference>
<dbReference type="GO" id="GO:0009611">
    <property type="term" value="P:response to wounding"/>
    <property type="evidence" value="ECO:0007669"/>
    <property type="project" value="Ensembl"/>
</dbReference>
<dbReference type="GO" id="GO:0009410">
    <property type="term" value="P:response to xenobiotic stimulus"/>
    <property type="evidence" value="ECO:0007669"/>
    <property type="project" value="Ensembl"/>
</dbReference>
<dbReference type="GO" id="GO:0001964">
    <property type="term" value="P:startle response"/>
    <property type="evidence" value="ECO:0007669"/>
    <property type="project" value="Ensembl"/>
</dbReference>
<dbReference type="GO" id="GO:0001963">
    <property type="term" value="P:synaptic transmission, dopaminergic"/>
    <property type="evidence" value="ECO:0007669"/>
    <property type="project" value="Ensembl"/>
</dbReference>
<dbReference type="GO" id="GO:0008542">
    <property type="term" value="P:visual learning"/>
    <property type="evidence" value="ECO:0007669"/>
    <property type="project" value="Ensembl"/>
</dbReference>
<dbReference type="CDD" id="cd02440">
    <property type="entry name" value="AdoMet_MTases"/>
    <property type="match status" value="1"/>
</dbReference>
<dbReference type="FunFam" id="3.40.50.150:FF:000054">
    <property type="entry name" value="Catechol O-methyltransferase"/>
    <property type="match status" value="1"/>
</dbReference>
<dbReference type="Gene3D" id="3.40.50.150">
    <property type="entry name" value="Vaccinia Virus protein VP39"/>
    <property type="match status" value="1"/>
</dbReference>
<dbReference type="InterPro" id="IPR017128">
    <property type="entry name" value="Catechol_O-MeTrfase_euk"/>
</dbReference>
<dbReference type="InterPro" id="IPR029063">
    <property type="entry name" value="SAM-dependent_MTases_sf"/>
</dbReference>
<dbReference type="InterPro" id="IPR002935">
    <property type="entry name" value="SAM_O-MeTrfase"/>
</dbReference>
<dbReference type="PANTHER" id="PTHR43836:SF3">
    <property type="entry name" value="CATECHOL O-METHYLTRANSFERASE"/>
    <property type="match status" value="1"/>
</dbReference>
<dbReference type="PANTHER" id="PTHR43836">
    <property type="entry name" value="CATECHOL O-METHYLTRANSFERASE 1-RELATED"/>
    <property type="match status" value="1"/>
</dbReference>
<dbReference type="Pfam" id="PF01596">
    <property type="entry name" value="Methyltransf_3"/>
    <property type="match status" value="1"/>
</dbReference>
<dbReference type="PIRSF" id="PIRSF037177">
    <property type="entry name" value="Catechol_O-mtfrase_euk"/>
    <property type="match status" value="1"/>
</dbReference>
<dbReference type="SUPFAM" id="SSF53335">
    <property type="entry name" value="S-adenosyl-L-methionine-dependent methyltransferases"/>
    <property type="match status" value="1"/>
</dbReference>
<dbReference type="PROSITE" id="PS51682">
    <property type="entry name" value="SAM_OMT_I"/>
    <property type="match status" value="1"/>
</dbReference>
<feature type="chain" id="PRO_0000020971" description="Catechol O-methyltransferase">
    <location>
        <begin position="1"/>
        <end position="271"/>
    </location>
</feature>
<feature type="topological domain" description="Cytoplasmic" evidence="2">
    <location>
        <begin position="1"/>
        <end position="6"/>
    </location>
</feature>
<feature type="transmembrane region" description="Helical; Signal-anchor for type II membrane protein" evidence="2">
    <location>
        <begin position="7"/>
        <end position="26"/>
    </location>
</feature>
<feature type="topological domain" description="Extracellular" evidence="2">
    <location>
        <begin position="27"/>
        <end position="271"/>
    </location>
</feature>
<feature type="binding site" evidence="3 12">
    <location>
        <position position="92"/>
    </location>
    <ligand>
        <name>S-adenosyl-L-methionine</name>
        <dbReference type="ChEBI" id="CHEBI:59789"/>
    </ligand>
</feature>
<feature type="binding site" evidence="3">
    <location>
        <position position="114"/>
    </location>
    <ligand>
        <name>S-adenosyl-L-methionine</name>
        <dbReference type="ChEBI" id="CHEBI:59789"/>
    </ligand>
</feature>
<feature type="binding site" evidence="3 12">
    <location>
        <position position="122"/>
    </location>
    <ligand>
        <name>S-adenosyl-L-methionine</name>
        <dbReference type="ChEBI" id="CHEBI:59789"/>
    </ligand>
</feature>
<feature type="binding site" evidence="3 12">
    <location>
        <position position="140"/>
    </location>
    <ligand>
        <name>S-adenosyl-L-methionine</name>
        <dbReference type="ChEBI" id="CHEBI:59789"/>
    </ligand>
</feature>
<feature type="binding site" evidence="3">
    <location>
        <position position="141"/>
    </location>
    <ligand>
        <name>S-adenosyl-L-methionine</name>
        <dbReference type="ChEBI" id="CHEBI:59789"/>
    </ligand>
</feature>
<feature type="binding site">
    <location>
        <begin position="167"/>
        <end position="170"/>
    </location>
    <ligand>
        <name>S-adenosyl-L-methionine</name>
        <dbReference type="ChEBI" id="CHEBI:59789"/>
    </ligand>
</feature>
<feature type="binding site" evidence="3">
    <location>
        <position position="169"/>
    </location>
    <ligand>
        <name>S-adenosyl-L-methionine</name>
        <dbReference type="ChEBI" id="CHEBI:59789"/>
    </ligand>
</feature>
<feature type="binding site" evidence="12">
    <location>
        <position position="191"/>
    </location>
    <ligand>
        <name>Mg(2+)</name>
        <dbReference type="ChEBI" id="CHEBI:18420"/>
    </ligand>
</feature>
<feature type="binding site" evidence="3 12">
    <location>
        <position position="191"/>
    </location>
    <ligand>
        <name>S-adenosyl-L-methionine</name>
        <dbReference type="ChEBI" id="CHEBI:59789"/>
    </ligand>
</feature>
<feature type="binding site">
    <location>
        <position position="194"/>
    </location>
    <ligand>
        <name>substrate</name>
    </ligand>
</feature>
<feature type="binding site" evidence="12">
    <location>
        <position position="219"/>
    </location>
    <ligand>
        <name>Mg(2+)</name>
        <dbReference type="ChEBI" id="CHEBI:18420"/>
    </ligand>
</feature>
<feature type="binding site" evidence="12">
    <location>
        <position position="220"/>
    </location>
    <ligand>
        <name>Mg(2+)</name>
        <dbReference type="ChEBI" id="CHEBI:18420"/>
    </ligand>
</feature>
<feature type="binding site">
    <location>
        <position position="220"/>
    </location>
    <ligand>
        <name>substrate</name>
    </ligand>
</feature>
<feature type="binding site">
    <location>
        <position position="249"/>
    </location>
    <ligand>
        <name>substrate</name>
    </ligand>
</feature>
<feature type="modified residue" description="Phosphoserine" evidence="1">
    <location>
        <position position="267"/>
    </location>
</feature>
<feature type="splice variant" id="VSP_018778" description="In isoform Soluble." evidence="17">
    <location>
        <begin position="1"/>
        <end position="50"/>
    </location>
</feature>
<feature type="sequence variant" id="VAR_013925" description="In dbSNP:rs6270." evidence="4 11">
    <original>C</original>
    <variation>S</variation>
    <location>
        <position position="34"/>
    </location>
</feature>
<feature type="sequence variant" id="VAR_013926" description="Correlated with reduced enzyme activity; associated with increased risk for schizophrenia; dbSNP:rs6267." evidence="4 8 16">
    <original>A</original>
    <variation>S</variation>
    <location>
        <position position="72"/>
    </location>
</feature>
<feature type="sequence variant" id="VAR_020274" description="In dbSNP:rs5031015.">
    <original>A</original>
    <variation>T</variation>
    <location>
        <position position="102"/>
    </location>
</feature>
<feature type="sequence variant" id="VAR_020275" description="In dbSNP:rs4986871.">
    <original>A</original>
    <variation>V</variation>
    <location>
        <position position="146"/>
    </location>
</feature>
<feature type="sequence variant" id="VAR_005139" description="In allele COMT*2; associated with low enzyme activity and thermolability; may increase the tendency to develop high blood pressure and abdominal obesity; dbSNP:rs4680." evidence="6 7 9 10 14 15 16">
    <original>V</original>
    <variation>M</variation>
    <location>
        <position position="158"/>
    </location>
</feature>
<feature type="sequence conflict" description="In Ref. 13; AA sequence." evidence="17" ref="13">
    <original>Q</original>
    <variation>N</variation>
    <location>
        <position position="245"/>
    </location>
</feature>
<feature type="helix" evidence="20">
    <location>
        <begin position="55"/>
        <end position="66"/>
    </location>
</feature>
<feature type="helix" evidence="20">
    <location>
        <begin position="72"/>
        <end position="85"/>
    </location>
</feature>
<feature type="helix" evidence="20">
    <location>
        <begin position="93"/>
        <end position="107"/>
    </location>
</feature>
<feature type="strand" evidence="20">
    <location>
        <begin position="110"/>
        <end position="115"/>
    </location>
</feature>
<feature type="strand" evidence="21">
    <location>
        <begin position="118"/>
        <end position="120"/>
    </location>
</feature>
<feature type="helix" evidence="20">
    <location>
        <begin position="121"/>
        <end position="127"/>
    </location>
</feature>
<feature type="strand" evidence="20">
    <location>
        <begin position="135"/>
        <end position="141"/>
    </location>
</feature>
<feature type="helix" evidence="20">
    <location>
        <begin position="143"/>
        <end position="155"/>
    </location>
</feature>
<feature type="helix" evidence="20">
    <location>
        <begin position="159"/>
        <end position="161"/>
    </location>
</feature>
<feature type="strand" evidence="20">
    <location>
        <begin position="162"/>
        <end position="167"/>
    </location>
</feature>
<feature type="helix" evidence="20">
    <location>
        <begin position="169"/>
        <end position="172"/>
    </location>
</feature>
<feature type="helix" evidence="20">
    <location>
        <begin position="173"/>
        <end position="175"/>
    </location>
</feature>
<feature type="helix" evidence="20">
    <location>
        <begin position="176"/>
        <end position="180"/>
    </location>
</feature>
<feature type="strand" evidence="20">
    <location>
        <begin position="185"/>
        <end position="190"/>
    </location>
</feature>
<feature type="helix" evidence="20">
    <location>
        <begin position="194"/>
        <end position="196"/>
    </location>
</feature>
<feature type="helix" evidence="20">
    <location>
        <begin position="197"/>
        <end position="206"/>
    </location>
</feature>
<feature type="strand" evidence="20">
    <location>
        <begin position="210"/>
        <end position="219"/>
    </location>
</feature>
<feature type="helix" evidence="20">
    <location>
        <begin position="221"/>
        <end position="225"/>
    </location>
</feature>
<feature type="helix" evidence="20">
    <location>
        <begin position="227"/>
        <end position="235"/>
    </location>
</feature>
<feature type="strand" evidence="20">
    <location>
        <begin position="239"/>
        <end position="247"/>
    </location>
</feature>
<feature type="strand" evidence="20">
    <location>
        <begin position="251"/>
        <end position="262"/>
    </location>
</feature>